<dbReference type="EC" id="3.1.4.1" evidence="33"/>
<dbReference type="EC" id="3.6.1.9" evidence="33"/>
<dbReference type="EMBL" id="M57736">
    <property type="protein sequence ID" value="AAA63237.1"/>
    <property type="status" value="ALT_INIT"/>
    <property type="molecule type" value="mRNA"/>
</dbReference>
<dbReference type="EMBL" id="D12485">
    <property type="protein sequence ID" value="BAA02054.1"/>
    <property type="status" value="ALT_INIT"/>
    <property type="molecule type" value="mRNA"/>
</dbReference>
<dbReference type="EMBL" id="AF110304">
    <property type="protein sequence ID" value="AAF36094.1"/>
    <property type="molecule type" value="Genomic_DNA"/>
</dbReference>
<dbReference type="EMBL" id="AF110280">
    <property type="protein sequence ID" value="AAF36094.1"/>
    <property type="status" value="JOINED"/>
    <property type="molecule type" value="Genomic_DNA"/>
</dbReference>
<dbReference type="EMBL" id="AF110281">
    <property type="protein sequence ID" value="AAF36094.1"/>
    <property type="status" value="JOINED"/>
    <property type="molecule type" value="Genomic_DNA"/>
</dbReference>
<dbReference type="EMBL" id="AF110283">
    <property type="protein sequence ID" value="AAF36094.1"/>
    <property type="status" value="JOINED"/>
    <property type="molecule type" value="Genomic_DNA"/>
</dbReference>
<dbReference type="EMBL" id="AF110284">
    <property type="protein sequence ID" value="AAF36094.1"/>
    <property type="status" value="JOINED"/>
    <property type="molecule type" value="Genomic_DNA"/>
</dbReference>
<dbReference type="EMBL" id="AF110285">
    <property type="protein sequence ID" value="AAF36094.1"/>
    <property type="status" value="JOINED"/>
    <property type="molecule type" value="Genomic_DNA"/>
</dbReference>
<dbReference type="EMBL" id="AF110286">
    <property type="protein sequence ID" value="AAF36094.1"/>
    <property type="status" value="JOINED"/>
    <property type="molecule type" value="Genomic_DNA"/>
</dbReference>
<dbReference type="EMBL" id="AF110287">
    <property type="protein sequence ID" value="AAF36094.1"/>
    <property type="status" value="JOINED"/>
    <property type="molecule type" value="Genomic_DNA"/>
</dbReference>
<dbReference type="EMBL" id="AF110288">
    <property type="protein sequence ID" value="AAF36094.1"/>
    <property type="status" value="JOINED"/>
    <property type="molecule type" value="Genomic_DNA"/>
</dbReference>
<dbReference type="EMBL" id="AF110289">
    <property type="protein sequence ID" value="AAF36094.1"/>
    <property type="status" value="JOINED"/>
    <property type="molecule type" value="Genomic_DNA"/>
</dbReference>
<dbReference type="EMBL" id="AF110290">
    <property type="protein sequence ID" value="AAF36094.1"/>
    <property type="status" value="JOINED"/>
    <property type="molecule type" value="Genomic_DNA"/>
</dbReference>
<dbReference type="EMBL" id="AF110291">
    <property type="protein sequence ID" value="AAF36094.1"/>
    <property type="status" value="JOINED"/>
    <property type="molecule type" value="Genomic_DNA"/>
</dbReference>
<dbReference type="EMBL" id="AF110292">
    <property type="protein sequence ID" value="AAF36094.1"/>
    <property type="status" value="JOINED"/>
    <property type="molecule type" value="Genomic_DNA"/>
</dbReference>
<dbReference type="EMBL" id="AF110293">
    <property type="protein sequence ID" value="AAF36094.1"/>
    <property type="status" value="JOINED"/>
    <property type="molecule type" value="Genomic_DNA"/>
</dbReference>
<dbReference type="EMBL" id="AF110294">
    <property type="protein sequence ID" value="AAF36094.1"/>
    <property type="status" value="JOINED"/>
    <property type="molecule type" value="Genomic_DNA"/>
</dbReference>
<dbReference type="EMBL" id="AF110295">
    <property type="protein sequence ID" value="AAF36094.1"/>
    <property type="status" value="JOINED"/>
    <property type="molecule type" value="Genomic_DNA"/>
</dbReference>
<dbReference type="EMBL" id="AF110296">
    <property type="protein sequence ID" value="AAF36094.1"/>
    <property type="status" value="JOINED"/>
    <property type="molecule type" value="Genomic_DNA"/>
</dbReference>
<dbReference type="EMBL" id="AF110297">
    <property type="protein sequence ID" value="AAF36094.1"/>
    <property type="status" value="JOINED"/>
    <property type="molecule type" value="Genomic_DNA"/>
</dbReference>
<dbReference type="EMBL" id="AF110298">
    <property type="protein sequence ID" value="AAF36094.1"/>
    <property type="status" value="JOINED"/>
    <property type="molecule type" value="Genomic_DNA"/>
</dbReference>
<dbReference type="EMBL" id="AF110299">
    <property type="protein sequence ID" value="AAF36094.1"/>
    <property type="status" value="JOINED"/>
    <property type="molecule type" value="Genomic_DNA"/>
</dbReference>
<dbReference type="EMBL" id="AF110300">
    <property type="protein sequence ID" value="AAF36094.1"/>
    <property type="status" value="JOINED"/>
    <property type="molecule type" value="Genomic_DNA"/>
</dbReference>
<dbReference type="EMBL" id="AF110301">
    <property type="protein sequence ID" value="AAF36094.1"/>
    <property type="status" value="JOINED"/>
    <property type="molecule type" value="Genomic_DNA"/>
</dbReference>
<dbReference type="EMBL" id="AF110302">
    <property type="protein sequence ID" value="AAF36094.1"/>
    <property type="status" value="JOINED"/>
    <property type="molecule type" value="Genomic_DNA"/>
</dbReference>
<dbReference type="EMBL" id="AF110303">
    <property type="protein sequence ID" value="AAF36094.1"/>
    <property type="status" value="JOINED"/>
    <property type="molecule type" value="Genomic_DNA"/>
</dbReference>
<dbReference type="EMBL" id="AJ242020">
    <property type="protein sequence ID" value="CAC39442.1"/>
    <property type="molecule type" value="Genomic_DNA"/>
</dbReference>
<dbReference type="EMBL" id="AJ242021">
    <property type="protein sequence ID" value="CAC39442.1"/>
    <property type="status" value="JOINED"/>
    <property type="molecule type" value="Genomic_DNA"/>
</dbReference>
<dbReference type="EMBL" id="AJ242022">
    <property type="protein sequence ID" value="CAC39442.1"/>
    <property type="status" value="JOINED"/>
    <property type="molecule type" value="Genomic_DNA"/>
</dbReference>
<dbReference type="EMBL" id="AJ242023">
    <property type="protein sequence ID" value="CAC39442.1"/>
    <property type="status" value="JOINED"/>
    <property type="molecule type" value="Genomic_DNA"/>
</dbReference>
<dbReference type="EMBL" id="AJ242024">
    <property type="protein sequence ID" value="CAC39442.1"/>
    <property type="status" value="JOINED"/>
    <property type="molecule type" value="Genomic_DNA"/>
</dbReference>
<dbReference type="EMBL" id="AJ242025">
    <property type="protein sequence ID" value="CAC39442.1"/>
    <property type="status" value="JOINED"/>
    <property type="molecule type" value="Genomic_DNA"/>
</dbReference>
<dbReference type="EMBL" id="AJ242026">
    <property type="protein sequence ID" value="CAC39442.1"/>
    <property type="status" value="JOINED"/>
    <property type="molecule type" value="Genomic_DNA"/>
</dbReference>
<dbReference type="EMBL" id="AJ242027">
    <property type="protein sequence ID" value="CAC39442.1"/>
    <property type="status" value="JOINED"/>
    <property type="molecule type" value="Genomic_DNA"/>
</dbReference>
<dbReference type="EMBL" id="AJ242028">
    <property type="protein sequence ID" value="CAC39442.1"/>
    <property type="status" value="JOINED"/>
    <property type="molecule type" value="Genomic_DNA"/>
</dbReference>
<dbReference type="EMBL" id="AJ242029">
    <property type="protein sequence ID" value="CAC39442.1"/>
    <property type="status" value="JOINED"/>
    <property type="molecule type" value="Genomic_DNA"/>
</dbReference>
<dbReference type="EMBL" id="AJ242030">
    <property type="protein sequence ID" value="CAC39442.1"/>
    <property type="status" value="JOINED"/>
    <property type="molecule type" value="Genomic_DNA"/>
</dbReference>
<dbReference type="EMBL" id="AJ242031">
    <property type="protein sequence ID" value="CAC39442.1"/>
    <property type="status" value="JOINED"/>
    <property type="molecule type" value="Genomic_DNA"/>
</dbReference>
<dbReference type="EMBL" id="AJ242032">
    <property type="protein sequence ID" value="CAC39442.1"/>
    <property type="status" value="JOINED"/>
    <property type="molecule type" value="Genomic_DNA"/>
</dbReference>
<dbReference type="EMBL" id="AJ242033">
    <property type="protein sequence ID" value="CAC39442.1"/>
    <property type="status" value="JOINED"/>
    <property type="molecule type" value="Genomic_DNA"/>
</dbReference>
<dbReference type="EMBL" id="AJ242034">
    <property type="protein sequence ID" value="CAC39442.1"/>
    <property type="status" value="JOINED"/>
    <property type="molecule type" value="Genomic_DNA"/>
</dbReference>
<dbReference type="EMBL" id="AJ242035">
    <property type="protein sequence ID" value="CAC39442.1"/>
    <property type="status" value="JOINED"/>
    <property type="molecule type" value="Genomic_DNA"/>
</dbReference>
<dbReference type="EMBL" id="AJ242036">
    <property type="protein sequence ID" value="CAC39442.1"/>
    <property type="status" value="JOINED"/>
    <property type="molecule type" value="Genomic_DNA"/>
</dbReference>
<dbReference type="EMBL" id="AJ242037">
    <property type="protein sequence ID" value="CAC39442.1"/>
    <property type="status" value="JOINED"/>
    <property type="molecule type" value="Genomic_DNA"/>
</dbReference>
<dbReference type="EMBL" id="AJ242038">
    <property type="protein sequence ID" value="CAC39442.1"/>
    <property type="status" value="JOINED"/>
    <property type="molecule type" value="Genomic_DNA"/>
</dbReference>
<dbReference type="EMBL" id="AJ242039">
    <property type="protein sequence ID" value="CAC39442.1"/>
    <property type="status" value="JOINED"/>
    <property type="molecule type" value="Genomic_DNA"/>
</dbReference>
<dbReference type="EMBL" id="AJ242040">
    <property type="protein sequence ID" value="CAC39442.1"/>
    <property type="status" value="JOINED"/>
    <property type="molecule type" value="Genomic_DNA"/>
</dbReference>
<dbReference type="EMBL" id="AJ242041">
    <property type="protein sequence ID" value="CAC39442.1"/>
    <property type="status" value="JOINED"/>
    <property type="molecule type" value="Genomic_DNA"/>
</dbReference>
<dbReference type="EMBL" id="AJ242042">
    <property type="protein sequence ID" value="CAC39442.1"/>
    <property type="status" value="JOINED"/>
    <property type="molecule type" value="Genomic_DNA"/>
</dbReference>
<dbReference type="EMBL" id="AJ242043">
    <property type="protein sequence ID" value="CAC39442.1"/>
    <property type="status" value="JOINED"/>
    <property type="molecule type" value="Genomic_DNA"/>
</dbReference>
<dbReference type="EMBL" id="AJ242044">
    <property type="protein sequence ID" value="CAC39442.1"/>
    <property type="status" value="JOINED"/>
    <property type="molecule type" value="Genomic_DNA"/>
</dbReference>
<dbReference type="EMBL" id="AL117378">
    <property type="status" value="NOT_ANNOTATED_CDS"/>
    <property type="molecule type" value="Genomic_DNA"/>
</dbReference>
<dbReference type="EMBL" id="AL139805">
    <property type="status" value="NOT_ANNOTATED_CDS"/>
    <property type="molecule type" value="Genomic_DNA"/>
</dbReference>
<dbReference type="EMBL" id="BC059375">
    <property type="protein sequence ID" value="AAH59375.2"/>
    <property type="status" value="ALT_INIT"/>
    <property type="molecule type" value="mRNA"/>
</dbReference>
<dbReference type="EMBL" id="AF067177">
    <property type="protein sequence ID" value="AAD38420.1"/>
    <property type="molecule type" value="Genomic_DNA"/>
</dbReference>
<dbReference type="EMBL" id="AF067178">
    <property type="protein sequence ID" value="AAD38421.1"/>
    <property type="molecule type" value="Genomic_DNA"/>
</dbReference>
<dbReference type="CCDS" id="CCDS5150.2"/>
<dbReference type="PIR" id="A39216">
    <property type="entry name" value="A39216"/>
</dbReference>
<dbReference type="RefSeq" id="NP_006199.2">
    <property type="nucleotide sequence ID" value="NM_006208.3"/>
</dbReference>
<dbReference type="PDB" id="2YS0">
    <property type="method" value="NMR"/>
    <property type="chains" value="A=147-189"/>
</dbReference>
<dbReference type="PDB" id="6WET">
    <property type="method" value="X-ray"/>
    <property type="resolution" value="2.60 A"/>
    <property type="chains" value="AaA/BaB=1-925"/>
</dbReference>
<dbReference type="PDB" id="6WEU">
    <property type="method" value="X-ray"/>
    <property type="resolution" value="2.65 A"/>
    <property type="chains" value="AbA/BbB=1-925"/>
</dbReference>
<dbReference type="PDB" id="6WEV">
    <property type="method" value="X-ray"/>
    <property type="resolution" value="2.90 A"/>
    <property type="chains" value="AbA/BbB=1-925"/>
</dbReference>
<dbReference type="PDB" id="6WEW">
    <property type="method" value="X-ray"/>
    <property type="resolution" value="2.73 A"/>
    <property type="chains" value="AbA/BaB=1-925"/>
</dbReference>
<dbReference type="PDB" id="6WFJ">
    <property type="method" value="X-ray"/>
    <property type="resolution" value="2.50 A"/>
    <property type="chains" value="AcA/BcB=1-925"/>
</dbReference>
<dbReference type="PDB" id="8GHR">
    <property type="method" value="EM"/>
    <property type="resolution" value="3.20 A"/>
    <property type="chains" value="A/B=186-925"/>
</dbReference>
<dbReference type="PDBsum" id="2YS0"/>
<dbReference type="PDBsum" id="6WET"/>
<dbReference type="PDBsum" id="6WEU"/>
<dbReference type="PDBsum" id="6WEV"/>
<dbReference type="PDBsum" id="6WEW"/>
<dbReference type="PDBsum" id="6WFJ"/>
<dbReference type="PDBsum" id="8GHR"/>
<dbReference type="BMRB" id="P22413"/>
<dbReference type="SMR" id="P22413"/>
<dbReference type="BioGRID" id="111193">
    <property type="interactions" value="57"/>
</dbReference>
<dbReference type="FunCoup" id="P22413">
    <property type="interactions" value="614"/>
</dbReference>
<dbReference type="IntAct" id="P22413">
    <property type="interactions" value="32"/>
</dbReference>
<dbReference type="MINT" id="P22413"/>
<dbReference type="STRING" id="9606.ENSP00000498074"/>
<dbReference type="BindingDB" id="P22413"/>
<dbReference type="ChEMBL" id="CHEMBL5925"/>
<dbReference type="DrugBank" id="DB11077">
    <property type="generic name" value="Polyethylene glycol 400"/>
</dbReference>
<dbReference type="DrugBank" id="DB06408">
    <property type="generic name" value="Taribavirin"/>
</dbReference>
<dbReference type="DrugCentral" id="P22413"/>
<dbReference type="GlyConnect" id="1196">
    <property type="glycosylation" value="19 N-Linked glycans (2 sites)"/>
</dbReference>
<dbReference type="GlyCosmos" id="P22413">
    <property type="glycosylation" value="9 sites, 18 glycans"/>
</dbReference>
<dbReference type="GlyGen" id="P22413">
    <property type="glycosylation" value="11 sites, 44 N-linked glycans (9 sites), 1 O-linked glycan (1 site)"/>
</dbReference>
<dbReference type="iPTMnet" id="P22413"/>
<dbReference type="PhosphoSitePlus" id="P22413"/>
<dbReference type="SwissPalm" id="P22413"/>
<dbReference type="BioMuta" id="ENPP1"/>
<dbReference type="DMDM" id="23503088"/>
<dbReference type="jPOST" id="P22413"/>
<dbReference type="MassIVE" id="P22413"/>
<dbReference type="PaxDb" id="9606-ENSP00000354238"/>
<dbReference type="PeptideAtlas" id="P22413"/>
<dbReference type="ProteomicsDB" id="53988"/>
<dbReference type="Pumba" id="P22413"/>
<dbReference type="Antibodypedia" id="32916">
    <property type="antibodies" value="395 antibodies from 35 providers"/>
</dbReference>
<dbReference type="DNASU" id="5167"/>
<dbReference type="Ensembl" id="ENST00000647893.1">
    <property type="protein sequence ID" value="ENSP00000498074.1"/>
    <property type="gene ID" value="ENSG00000197594.14"/>
</dbReference>
<dbReference type="GeneID" id="5167"/>
<dbReference type="KEGG" id="hsa:5167"/>
<dbReference type="MANE-Select" id="ENST00000647893.1">
    <property type="protein sequence ID" value="ENSP00000498074.1"/>
    <property type="RefSeq nucleotide sequence ID" value="NM_006208.3"/>
    <property type="RefSeq protein sequence ID" value="NP_006199.2"/>
</dbReference>
<dbReference type="UCSC" id="uc011ecf.2">
    <property type="organism name" value="human"/>
</dbReference>
<dbReference type="AGR" id="HGNC:3356"/>
<dbReference type="CTD" id="5167"/>
<dbReference type="DisGeNET" id="5167"/>
<dbReference type="GeneCards" id="ENPP1"/>
<dbReference type="GeneReviews" id="ENPP1"/>
<dbReference type="HGNC" id="HGNC:3356">
    <property type="gene designation" value="ENPP1"/>
</dbReference>
<dbReference type="HPA" id="ENSG00000197594">
    <property type="expression patterns" value="Tissue enhanced (placenta)"/>
</dbReference>
<dbReference type="MalaCards" id="ENPP1"/>
<dbReference type="MIM" id="125853">
    <property type="type" value="phenotype"/>
</dbReference>
<dbReference type="MIM" id="173335">
    <property type="type" value="gene"/>
</dbReference>
<dbReference type="MIM" id="208000">
    <property type="type" value="phenotype"/>
</dbReference>
<dbReference type="MIM" id="602475">
    <property type="type" value="phenotype"/>
</dbReference>
<dbReference type="MIM" id="613312">
    <property type="type" value="phenotype"/>
</dbReference>
<dbReference type="MIM" id="615522">
    <property type="type" value="phenotype"/>
</dbReference>
<dbReference type="neXtProt" id="NX_P22413"/>
<dbReference type="OpenTargets" id="ENSG00000197594"/>
<dbReference type="Orphanet" id="289176">
    <property type="disease" value="Autosomal recessive hypophosphatemic rickets"/>
</dbReference>
<dbReference type="Orphanet" id="51608">
    <property type="disease" value="Generalized arterial calcification of infancy"/>
</dbReference>
<dbReference type="Orphanet" id="324561">
    <property type="disease" value="Hypopigmentation-punctate palmoplantar keratoderma syndrome"/>
</dbReference>
<dbReference type="Orphanet" id="758">
    <property type="disease" value="Pseudoxanthoma elasticum"/>
</dbReference>
<dbReference type="PharmGKB" id="PA27791"/>
<dbReference type="VEuPathDB" id="HostDB:ENSG00000197594"/>
<dbReference type="eggNOG" id="KOG2645">
    <property type="taxonomic scope" value="Eukaryota"/>
</dbReference>
<dbReference type="GeneTree" id="ENSGT00940000156034"/>
<dbReference type="HOGENOM" id="CLU_012256_0_1_1"/>
<dbReference type="InParanoid" id="P22413"/>
<dbReference type="OMA" id="LMDGMIN"/>
<dbReference type="OrthoDB" id="415411at2759"/>
<dbReference type="PAN-GO" id="P22413">
    <property type="GO annotations" value="8 GO annotations based on evolutionary models"/>
</dbReference>
<dbReference type="PhylomeDB" id="P22413"/>
<dbReference type="TreeFam" id="TF330032"/>
<dbReference type="BRENDA" id="3.6.1.9">
    <property type="organism ID" value="2681"/>
</dbReference>
<dbReference type="PathwayCommons" id="P22413"/>
<dbReference type="Reactome" id="R-HSA-196843">
    <property type="pathway name" value="Vitamin B2 (riboflavin) metabolism"/>
</dbReference>
<dbReference type="Reactome" id="R-HSA-199220">
    <property type="pathway name" value="Vitamin B5 (pantothenate) metabolism"/>
</dbReference>
<dbReference type="SABIO-RK" id="P22413"/>
<dbReference type="SignaLink" id="P22413"/>
<dbReference type="SIGNOR" id="P22413"/>
<dbReference type="BioGRID-ORCS" id="5167">
    <property type="hits" value="14 hits in 1158 CRISPR screens"/>
</dbReference>
<dbReference type="ChiTaRS" id="ENPP1">
    <property type="organism name" value="human"/>
</dbReference>
<dbReference type="EvolutionaryTrace" id="P22413"/>
<dbReference type="GeneWiki" id="Ectonucleotide_pyrophosphatase/phosphodiesterase_1"/>
<dbReference type="GenomeRNAi" id="5167"/>
<dbReference type="Pharos" id="P22413">
    <property type="development level" value="Tchem"/>
</dbReference>
<dbReference type="PRO" id="PR:P22413"/>
<dbReference type="Proteomes" id="UP000005640">
    <property type="component" value="Chromosome 6"/>
</dbReference>
<dbReference type="RNAct" id="P22413">
    <property type="molecule type" value="protein"/>
</dbReference>
<dbReference type="Bgee" id="ENSG00000197594">
    <property type="expression patterns" value="Expressed in tibia and 165 other cell types or tissues"/>
</dbReference>
<dbReference type="ExpressionAtlas" id="P22413">
    <property type="expression patterns" value="baseline and differential"/>
</dbReference>
<dbReference type="GO" id="GO:0016323">
    <property type="term" value="C:basolateral plasma membrane"/>
    <property type="evidence" value="ECO:0000303"/>
    <property type="project" value="BHF-UCL"/>
</dbReference>
<dbReference type="GO" id="GO:0009986">
    <property type="term" value="C:cell surface"/>
    <property type="evidence" value="ECO:0000314"/>
    <property type="project" value="BHF-UCL"/>
</dbReference>
<dbReference type="GO" id="GO:0005615">
    <property type="term" value="C:extracellular space"/>
    <property type="evidence" value="ECO:0000314"/>
    <property type="project" value="BHF-UCL"/>
</dbReference>
<dbReference type="GO" id="GO:0005765">
    <property type="term" value="C:lysosomal membrane"/>
    <property type="evidence" value="ECO:0007005"/>
    <property type="project" value="UniProtKB"/>
</dbReference>
<dbReference type="GO" id="GO:0016020">
    <property type="term" value="C:membrane"/>
    <property type="evidence" value="ECO:0000250"/>
    <property type="project" value="UniProtKB"/>
</dbReference>
<dbReference type="GO" id="GO:0005886">
    <property type="term" value="C:plasma membrane"/>
    <property type="evidence" value="ECO:0000314"/>
    <property type="project" value="UniProtKB"/>
</dbReference>
<dbReference type="GO" id="GO:0004115">
    <property type="term" value="F:3',5'-cyclic-AMP phosphodiesterase activity"/>
    <property type="evidence" value="ECO:0007669"/>
    <property type="project" value="RHEA"/>
</dbReference>
<dbReference type="GO" id="GO:0050656">
    <property type="term" value="F:3'-phosphoadenosine 5'-phosphosulfate binding"/>
    <property type="evidence" value="ECO:0000305"/>
    <property type="project" value="BHF-UCL"/>
</dbReference>
<dbReference type="GO" id="GO:0005524">
    <property type="term" value="F:ATP binding"/>
    <property type="evidence" value="ECO:0000314"/>
    <property type="project" value="BHF-UCL"/>
</dbReference>
<dbReference type="GO" id="GO:0047693">
    <property type="term" value="F:ATP diphosphatase activity"/>
    <property type="evidence" value="ECO:0007669"/>
    <property type="project" value="RHEA"/>
</dbReference>
<dbReference type="GO" id="GO:0005509">
    <property type="term" value="F:calcium ion binding"/>
    <property type="evidence" value="ECO:0000250"/>
    <property type="project" value="UniProtKB"/>
</dbReference>
<dbReference type="GO" id="GO:0106177">
    <property type="term" value="F:cyclic-GMP-AMP hydrolase activity"/>
    <property type="evidence" value="ECO:0000314"/>
    <property type="project" value="UniProtKB"/>
</dbReference>
<dbReference type="GO" id="GO:0004551">
    <property type="term" value="F:dinucleotide phosphatase activity"/>
    <property type="evidence" value="ECO:0000314"/>
    <property type="project" value="BHF-UCL"/>
</dbReference>
<dbReference type="GO" id="GO:0004527">
    <property type="term" value="F:exonuclease activity"/>
    <property type="evidence" value="ECO:0000314"/>
    <property type="project" value="UniProtKB"/>
</dbReference>
<dbReference type="GO" id="GO:0036219">
    <property type="term" value="F:GTP diphosphatase activity"/>
    <property type="evidence" value="ECO:0007669"/>
    <property type="project" value="RHEA"/>
</dbReference>
<dbReference type="GO" id="GO:0005158">
    <property type="term" value="F:insulin receptor binding"/>
    <property type="evidence" value="ECO:0000314"/>
    <property type="project" value="BHF-UCL"/>
</dbReference>
<dbReference type="GO" id="GO:0003676">
    <property type="term" value="F:nucleic acid binding"/>
    <property type="evidence" value="ECO:0007669"/>
    <property type="project" value="InterPro"/>
</dbReference>
<dbReference type="GO" id="GO:0047429">
    <property type="term" value="F:nucleoside triphosphate diphosphatase activity"/>
    <property type="evidence" value="ECO:0000314"/>
    <property type="project" value="UniProtKB"/>
</dbReference>
<dbReference type="GO" id="GO:0016791">
    <property type="term" value="F:phosphatase activity"/>
    <property type="evidence" value="ECO:0000314"/>
    <property type="project" value="MGI"/>
</dbReference>
<dbReference type="GO" id="GO:0004528">
    <property type="term" value="F:phosphodiesterase I activity"/>
    <property type="evidence" value="ECO:0000314"/>
    <property type="project" value="UniProtKB"/>
</dbReference>
<dbReference type="GO" id="GO:0030247">
    <property type="term" value="F:polysaccharide binding"/>
    <property type="evidence" value="ECO:0007669"/>
    <property type="project" value="InterPro"/>
</dbReference>
<dbReference type="GO" id="GO:0042803">
    <property type="term" value="F:protein homodimerization activity"/>
    <property type="evidence" value="ECO:0000314"/>
    <property type="project" value="UniProtKB"/>
</dbReference>
<dbReference type="GO" id="GO:0005044">
    <property type="term" value="F:scavenger receptor activity"/>
    <property type="evidence" value="ECO:0007669"/>
    <property type="project" value="InterPro"/>
</dbReference>
<dbReference type="GO" id="GO:0036221">
    <property type="term" value="F:UTP diphosphatase activity"/>
    <property type="evidence" value="ECO:0007669"/>
    <property type="project" value="RHEA"/>
</dbReference>
<dbReference type="GO" id="GO:0008270">
    <property type="term" value="F:zinc ion binding"/>
    <property type="evidence" value="ECO:0000250"/>
    <property type="project" value="UniProtKB"/>
</dbReference>
<dbReference type="GO" id="GO:0050427">
    <property type="term" value="P:3'-phosphoadenosine 5'-phosphosulfate metabolic process"/>
    <property type="evidence" value="ECO:0000314"/>
    <property type="project" value="BHF-UCL"/>
</dbReference>
<dbReference type="GO" id="GO:0046034">
    <property type="term" value="P:ATP metabolic process"/>
    <property type="evidence" value="ECO:0000314"/>
    <property type="project" value="MGI"/>
</dbReference>
<dbReference type="GO" id="GO:0030282">
    <property type="term" value="P:bone mineralization"/>
    <property type="evidence" value="ECO:0000314"/>
    <property type="project" value="MGI"/>
</dbReference>
<dbReference type="GO" id="GO:0032869">
    <property type="term" value="P:cellular response to insulin stimulus"/>
    <property type="evidence" value="ECO:0000314"/>
    <property type="project" value="BHF-UCL"/>
</dbReference>
<dbReference type="GO" id="GO:0010467">
    <property type="term" value="P:gene expression"/>
    <property type="evidence" value="ECO:0000314"/>
    <property type="project" value="MGI"/>
</dbReference>
<dbReference type="GO" id="GO:0006091">
    <property type="term" value="P:generation of precursor metabolites and energy"/>
    <property type="evidence" value="ECO:0000314"/>
    <property type="project" value="BHF-UCL"/>
</dbReference>
<dbReference type="GO" id="GO:0006955">
    <property type="term" value="P:immune response"/>
    <property type="evidence" value="ECO:0007669"/>
    <property type="project" value="InterPro"/>
</dbReference>
<dbReference type="GO" id="GO:0030505">
    <property type="term" value="P:inorganic diphosphate transport"/>
    <property type="evidence" value="ECO:0000314"/>
    <property type="project" value="BHF-UCL"/>
</dbReference>
<dbReference type="GO" id="GO:0030643">
    <property type="term" value="P:intracellular phosphate ion homeostasis"/>
    <property type="evidence" value="ECO:0000314"/>
    <property type="project" value="BHF-UCL"/>
</dbReference>
<dbReference type="GO" id="GO:0030318">
    <property type="term" value="P:melanocyte differentiation"/>
    <property type="evidence" value="ECO:0000315"/>
    <property type="project" value="UniProtKB"/>
</dbReference>
<dbReference type="GO" id="GO:0030502">
    <property type="term" value="P:negative regulation of bone mineralization"/>
    <property type="evidence" value="ECO:0000250"/>
    <property type="project" value="UniProtKB"/>
</dbReference>
<dbReference type="GO" id="GO:0030308">
    <property type="term" value="P:negative regulation of cell growth"/>
    <property type="evidence" value="ECO:0000314"/>
    <property type="project" value="BHF-UCL"/>
</dbReference>
<dbReference type="GO" id="GO:0046325">
    <property type="term" value="P:negative regulation of D-glucose import"/>
    <property type="evidence" value="ECO:0000314"/>
    <property type="project" value="BHF-UCL"/>
</dbReference>
<dbReference type="GO" id="GO:0045599">
    <property type="term" value="P:negative regulation of fat cell differentiation"/>
    <property type="evidence" value="ECO:0000314"/>
    <property type="project" value="BHF-UCL"/>
</dbReference>
<dbReference type="GO" id="GO:0045719">
    <property type="term" value="P:negative regulation of glycogen biosynthetic process"/>
    <property type="evidence" value="ECO:0000314"/>
    <property type="project" value="BHF-UCL"/>
</dbReference>
<dbReference type="GO" id="GO:1990787">
    <property type="term" value="P:negative regulation of hh target transcription factor activity"/>
    <property type="evidence" value="ECO:0000250"/>
    <property type="project" value="UniProtKB"/>
</dbReference>
<dbReference type="GO" id="GO:0046627">
    <property type="term" value="P:negative regulation of insulin receptor signaling pathway"/>
    <property type="evidence" value="ECO:0000314"/>
    <property type="project" value="BHF-UCL"/>
</dbReference>
<dbReference type="GO" id="GO:0090304">
    <property type="term" value="P:nucleic acid metabolic process"/>
    <property type="evidence" value="ECO:0000314"/>
    <property type="project" value="UniProtKB"/>
</dbReference>
<dbReference type="GO" id="GO:0009143">
    <property type="term" value="P:nucleoside triphosphate catabolic process"/>
    <property type="evidence" value="ECO:0000314"/>
    <property type="project" value="BHF-UCL"/>
</dbReference>
<dbReference type="GO" id="GO:0055062">
    <property type="term" value="P:phosphate ion homeostasis"/>
    <property type="evidence" value="ECO:0000314"/>
    <property type="project" value="MGI"/>
</dbReference>
<dbReference type="GO" id="GO:0006796">
    <property type="term" value="P:phosphate-containing compound metabolic process"/>
    <property type="evidence" value="ECO:0000314"/>
    <property type="project" value="BHF-UCL"/>
</dbReference>
<dbReference type="GO" id="GO:0030500">
    <property type="term" value="P:regulation of bone mineralization"/>
    <property type="evidence" value="ECO:0000318"/>
    <property type="project" value="GO_Central"/>
</dbReference>
<dbReference type="GO" id="GO:0033198">
    <property type="term" value="P:response to ATP"/>
    <property type="evidence" value="ECO:0000314"/>
    <property type="project" value="MGI"/>
</dbReference>
<dbReference type="CDD" id="cd16018">
    <property type="entry name" value="Enpp"/>
    <property type="match status" value="1"/>
</dbReference>
<dbReference type="CDD" id="cd00091">
    <property type="entry name" value="NUC"/>
    <property type="match status" value="1"/>
</dbReference>
<dbReference type="FunFam" id="3.40.720.10:FF:000010">
    <property type="entry name" value="Ectonucleotide pyrophosphatase/phosphodiesterase family member 1"/>
    <property type="match status" value="1"/>
</dbReference>
<dbReference type="FunFam" id="4.10.410.20:FF:000003">
    <property type="entry name" value="Ectonucleotide pyrophosphatase/phosphodiesterase family member 1"/>
    <property type="match status" value="1"/>
</dbReference>
<dbReference type="FunFam" id="3.40.570.10:FF:000006">
    <property type="entry name" value="ectonucleotide pyrophosphatase/phosphodiesterase family member 1"/>
    <property type="match status" value="1"/>
</dbReference>
<dbReference type="FunFam" id="4.10.410.20:FF:000001">
    <property type="entry name" value="Ectonucleotide pyrophosphatase/phosphodiesterase family member 2"/>
    <property type="match status" value="1"/>
</dbReference>
<dbReference type="Gene3D" id="4.10.410.20">
    <property type="match status" value="2"/>
</dbReference>
<dbReference type="Gene3D" id="3.40.720.10">
    <property type="entry name" value="Alkaline Phosphatase, subunit A"/>
    <property type="match status" value="1"/>
</dbReference>
<dbReference type="Gene3D" id="3.40.570.10">
    <property type="entry name" value="Extracellular Endonuclease, subunit A"/>
    <property type="match status" value="1"/>
</dbReference>
<dbReference type="InterPro" id="IPR017850">
    <property type="entry name" value="Alkaline_phosphatase_core_sf"/>
</dbReference>
<dbReference type="InterPro" id="IPR044929">
    <property type="entry name" value="DNA/RNA_non-sp_Endonuclease_sf"/>
</dbReference>
<dbReference type="InterPro" id="IPR001604">
    <property type="entry name" value="Endo_G_ENPP1-like_dom"/>
</dbReference>
<dbReference type="InterPro" id="IPR020821">
    <property type="entry name" value="ENPP1-3/EXOG-like_nuc-like"/>
</dbReference>
<dbReference type="InterPro" id="IPR044925">
    <property type="entry name" value="His-Me_finger_sf"/>
</dbReference>
<dbReference type="InterPro" id="IPR002591">
    <property type="entry name" value="Phosphodiest/P_Trfase"/>
</dbReference>
<dbReference type="InterPro" id="IPR020436">
    <property type="entry name" value="SMB_chordata"/>
</dbReference>
<dbReference type="InterPro" id="IPR036024">
    <property type="entry name" value="Somatomedin_B-like_dom_sf"/>
</dbReference>
<dbReference type="InterPro" id="IPR001212">
    <property type="entry name" value="Somatomedin_B_dom"/>
</dbReference>
<dbReference type="PANTHER" id="PTHR10151">
    <property type="entry name" value="ECTONUCLEOTIDE PYROPHOSPHATASE/PHOSPHODIESTERASE"/>
    <property type="match status" value="1"/>
</dbReference>
<dbReference type="PANTHER" id="PTHR10151:SF77">
    <property type="entry name" value="ECTONUCLEOTIDE PYROPHOSPHATASE_PHOSPHODIESTERASE FAMILY MEMBER 1"/>
    <property type="match status" value="1"/>
</dbReference>
<dbReference type="Pfam" id="PF01223">
    <property type="entry name" value="Endonuclease_NS"/>
    <property type="match status" value="1"/>
</dbReference>
<dbReference type="Pfam" id="PF01663">
    <property type="entry name" value="Phosphodiest"/>
    <property type="match status" value="1"/>
</dbReference>
<dbReference type="Pfam" id="PF01033">
    <property type="entry name" value="Somatomedin_B"/>
    <property type="match status" value="2"/>
</dbReference>
<dbReference type="PRINTS" id="PR00022">
    <property type="entry name" value="SOMATOMEDINB"/>
</dbReference>
<dbReference type="SMART" id="SM00892">
    <property type="entry name" value="Endonuclease_NS"/>
    <property type="match status" value="1"/>
</dbReference>
<dbReference type="SMART" id="SM00477">
    <property type="entry name" value="NUC"/>
    <property type="match status" value="1"/>
</dbReference>
<dbReference type="SMART" id="SM00201">
    <property type="entry name" value="SO"/>
    <property type="match status" value="2"/>
</dbReference>
<dbReference type="SUPFAM" id="SSF53649">
    <property type="entry name" value="Alkaline phosphatase-like"/>
    <property type="match status" value="1"/>
</dbReference>
<dbReference type="SUPFAM" id="SSF54060">
    <property type="entry name" value="His-Me finger endonucleases"/>
    <property type="match status" value="1"/>
</dbReference>
<dbReference type="SUPFAM" id="SSF90188">
    <property type="entry name" value="Somatomedin B domain"/>
    <property type="match status" value="2"/>
</dbReference>
<dbReference type="PROSITE" id="PS00524">
    <property type="entry name" value="SMB_1"/>
    <property type="match status" value="2"/>
</dbReference>
<dbReference type="PROSITE" id="PS50958">
    <property type="entry name" value="SMB_2"/>
    <property type="match status" value="2"/>
</dbReference>
<feature type="chain" id="PRO_0000188564" description="Ectonucleotide pyrophosphatase/phosphodiesterase family member 1">
    <location>
        <begin position="1"/>
        <end position="925"/>
    </location>
</feature>
<feature type="chain" id="PRO_0000447133" description="Ectonucleotide pyrophosphatase/phosphodiesterase family member 1, secreted form" evidence="1">
    <location>
        <begin position="103"/>
        <end position="925"/>
    </location>
</feature>
<feature type="topological domain" description="Cytoplasmic" evidence="4">
    <location>
        <begin position="1"/>
        <end position="76"/>
    </location>
</feature>
<feature type="transmembrane region" description="Helical; Signal-anchor for type II membrane protein" evidence="4">
    <location>
        <begin position="77"/>
        <end position="97"/>
    </location>
</feature>
<feature type="topological domain" description="Extracellular" evidence="4">
    <location>
        <begin position="98"/>
        <end position="925"/>
    </location>
</feature>
<feature type="domain" description="SMB 1" evidence="5">
    <location>
        <begin position="104"/>
        <end position="144"/>
    </location>
</feature>
<feature type="domain" description="SMB 2" evidence="5">
    <location>
        <begin position="145"/>
        <end position="189"/>
    </location>
</feature>
<feature type="region of interest" description="Disordered" evidence="6">
    <location>
        <begin position="1"/>
        <end position="43"/>
    </location>
</feature>
<feature type="region of interest" description="Phosphodiesterase" evidence="1">
    <location>
        <begin position="191"/>
        <end position="591"/>
    </location>
</feature>
<feature type="region of interest" description="Linker" evidence="1">
    <location>
        <begin position="597"/>
        <end position="647"/>
    </location>
</feature>
<feature type="region of interest" description="Nuclease-like domain" evidence="1">
    <location>
        <begin position="654"/>
        <end position="925"/>
    </location>
</feature>
<feature type="short sequence motif" description="Di-leucine motif" evidence="1">
    <location>
        <begin position="45"/>
        <end position="52"/>
    </location>
</feature>
<feature type="compositionally biased region" description="Gly residues" evidence="6">
    <location>
        <begin position="1"/>
        <end position="17"/>
    </location>
</feature>
<feature type="active site" description="AMP-threonine intermediate" evidence="1">
    <location>
        <position position="256"/>
    </location>
</feature>
<feature type="binding site" evidence="1">
    <location>
        <position position="218"/>
    </location>
    <ligand>
        <name>AMP</name>
        <dbReference type="ChEBI" id="CHEBI:456215"/>
    </ligand>
</feature>
<feature type="binding site" evidence="1">
    <location>
        <position position="218"/>
    </location>
    <ligand>
        <name>Zn(2+)</name>
        <dbReference type="ChEBI" id="CHEBI:29105"/>
        <label>1</label>
        <note>catalytic</note>
    </ligand>
</feature>
<feature type="binding site" evidence="1">
    <location>
        <position position="256"/>
    </location>
    <ligand>
        <name>AMP</name>
        <dbReference type="ChEBI" id="CHEBI:456215"/>
    </ligand>
</feature>
<feature type="binding site" evidence="1">
    <location>
        <position position="256"/>
    </location>
    <ligand>
        <name>CMP</name>
        <dbReference type="ChEBI" id="CHEBI:60377"/>
    </ligand>
</feature>
<feature type="binding site" evidence="1">
    <location>
        <position position="256"/>
    </location>
    <ligand>
        <name>dTMP</name>
        <dbReference type="ChEBI" id="CHEBI:63528"/>
    </ligand>
</feature>
<feature type="binding site" evidence="1">
    <location>
        <position position="256"/>
    </location>
    <ligand>
        <name>GMP</name>
        <dbReference type="ChEBI" id="CHEBI:58115"/>
    </ligand>
</feature>
<feature type="binding site" evidence="1">
    <location>
        <position position="256"/>
    </location>
    <ligand>
        <name>Zn(2+)</name>
        <dbReference type="ChEBI" id="CHEBI:29105"/>
        <label>1</label>
        <note>catalytic</note>
    </ligand>
</feature>
<feature type="binding site" evidence="1">
    <location>
        <position position="277"/>
    </location>
    <ligand>
        <name>AMP</name>
        <dbReference type="ChEBI" id="CHEBI:456215"/>
    </ligand>
</feature>
<feature type="binding site" evidence="1">
    <location>
        <position position="277"/>
    </location>
    <ligand>
        <name>CMP</name>
        <dbReference type="ChEBI" id="CHEBI:60377"/>
    </ligand>
</feature>
<feature type="binding site" evidence="1">
    <location>
        <position position="277"/>
    </location>
    <ligand>
        <name>dTMP</name>
        <dbReference type="ChEBI" id="CHEBI:63528"/>
    </ligand>
</feature>
<feature type="binding site" evidence="1">
    <location>
        <position position="277"/>
    </location>
    <ligand>
        <name>GMP</name>
        <dbReference type="ChEBI" id="CHEBI:58115"/>
    </ligand>
</feature>
<feature type="binding site" evidence="1">
    <location>
        <position position="290"/>
    </location>
    <ligand>
        <name>GMP</name>
        <dbReference type="ChEBI" id="CHEBI:58115"/>
    </ligand>
</feature>
<feature type="binding site" evidence="1">
    <location>
        <position position="295"/>
    </location>
    <ligand>
        <name>AMP</name>
        <dbReference type="ChEBI" id="CHEBI:456215"/>
    </ligand>
</feature>
<feature type="binding site" evidence="1">
    <location>
        <position position="295"/>
    </location>
    <ligand>
        <name>CMP</name>
        <dbReference type="ChEBI" id="CHEBI:60377"/>
    </ligand>
</feature>
<feature type="binding site" evidence="1">
    <location>
        <position position="295"/>
    </location>
    <ligand>
        <name>GMP</name>
        <dbReference type="ChEBI" id="CHEBI:58115"/>
    </ligand>
</feature>
<feature type="binding site" evidence="1">
    <location>
        <position position="340"/>
    </location>
    <ligand>
        <name>AMP</name>
        <dbReference type="ChEBI" id="CHEBI:456215"/>
    </ligand>
</feature>
<feature type="binding site" evidence="1">
    <location>
        <position position="340"/>
    </location>
    <ligand>
        <name>CMP</name>
        <dbReference type="ChEBI" id="CHEBI:60377"/>
    </ligand>
</feature>
<feature type="binding site" evidence="1">
    <location>
        <position position="340"/>
    </location>
    <ligand>
        <name>dTMP</name>
        <dbReference type="ChEBI" id="CHEBI:63528"/>
    </ligand>
</feature>
<feature type="binding site" evidence="1">
    <location>
        <position position="340"/>
    </location>
    <ligand>
        <name>GMP</name>
        <dbReference type="ChEBI" id="CHEBI:58115"/>
    </ligand>
</feature>
<feature type="binding site" evidence="1">
    <location>
        <position position="376"/>
    </location>
    <ligand>
        <name>AMP</name>
        <dbReference type="ChEBI" id="CHEBI:456215"/>
    </ligand>
</feature>
<feature type="binding site" evidence="1">
    <location>
        <position position="376"/>
    </location>
    <ligand>
        <name>CMP</name>
        <dbReference type="ChEBI" id="CHEBI:60377"/>
    </ligand>
</feature>
<feature type="binding site" evidence="1">
    <location>
        <position position="376"/>
    </location>
    <ligand>
        <name>dTMP</name>
        <dbReference type="ChEBI" id="CHEBI:63528"/>
    </ligand>
</feature>
<feature type="binding site" evidence="1">
    <location>
        <position position="376"/>
    </location>
    <ligand>
        <name>GMP</name>
        <dbReference type="ChEBI" id="CHEBI:58115"/>
    </ligand>
</feature>
<feature type="binding site" evidence="1">
    <location>
        <position position="376"/>
    </location>
    <ligand>
        <name>Zn(2+)</name>
        <dbReference type="ChEBI" id="CHEBI:29105"/>
        <label>2</label>
        <note>catalytic</note>
    </ligand>
</feature>
<feature type="binding site" evidence="1">
    <location>
        <position position="380"/>
    </location>
    <ligand>
        <name>2',3'-cGAMP</name>
        <dbReference type="ChEBI" id="CHEBI:143093"/>
        <note>substrate</note>
    </ligand>
</feature>
<feature type="binding site" evidence="1">
    <location>
        <position position="380"/>
    </location>
    <ligand>
        <name>Zn(2+)</name>
        <dbReference type="ChEBI" id="CHEBI:29105"/>
        <label>2</label>
        <note>catalytic</note>
    </ligand>
</feature>
<feature type="binding site" evidence="1">
    <location>
        <position position="423"/>
    </location>
    <ligand>
        <name>Zn(2+)</name>
        <dbReference type="ChEBI" id="CHEBI:29105"/>
        <label>1</label>
        <note>catalytic</note>
    </ligand>
</feature>
<feature type="binding site" evidence="1">
    <location>
        <position position="424"/>
    </location>
    <ligand>
        <name>AMP</name>
        <dbReference type="ChEBI" id="CHEBI:456215"/>
    </ligand>
</feature>
<feature type="binding site" evidence="1">
    <location>
        <position position="424"/>
    </location>
    <ligand>
        <name>CMP</name>
        <dbReference type="ChEBI" id="CHEBI:60377"/>
    </ligand>
</feature>
<feature type="binding site" evidence="1">
    <location>
        <position position="424"/>
    </location>
    <ligand>
        <name>dTMP</name>
        <dbReference type="ChEBI" id="CHEBI:63528"/>
    </ligand>
</feature>
<feature type="binding site" evidence="1">
    <location>
        <position position="424"/>
    </location>
    <ligand>
        <name>GMP</name>
        <dbReference type="ChEBI" id="CHEBI:58115"/>
    </ligand>
</feature>
<feature type="binding site" evidence="1">
    <location>
        <position position="424"/>
    </location>
    <ligand>
        <name>Zn(2+)</name>
        <dbReference type="ChEBI" id="CHEBI:29105"/>
        <label>1</label>
        <note>catalytic</note>
    </ligand>
</feature>
<feature type="binding site" evidence="1">
    <location>
        <position position="532"/>
    </location>
    <ligand>
        <name>2',3'-cGAMP</name>
        <dbReference type="ChEBI" id="CHEBI:143093"/>
        <note>substrate</note>
    </ligand>
</feature>
<feature type="binding site" evidence="1">
    <location>
        <position position="535"/>
    </location>
    <ligand>
        <name>AMP</name>
        <dbReference type="ChEBI" id="CHEBI:456215"/>
    </ligand>
</feature>
<feature type="binding site" evidence="1">
    <location>
        <position position="535"/>
    </location>
    <ligand>
        <name>CMP</name>
        <dbReference type="ChEBI" id="CHEBI:60377"/>
    </ligand>
</feature>
<feature type="binding site" evidence="1">
    <location>
        <position position="535"/>
    </location>
    <ligand>
        <name>dTMP</name>
        <dbReference type="ChEBI" id="CHEBI:63528"/>
    </ligand>
</feature>
<feature type="binding site" evidence="1">
    <location>
        <position position="535"/>
    </location>
    <ligand>
        <name>GMP</name>
        <dbReference type="ChEBI" id="CHEBI:58115"/>
    </ligand>
</feature>
<feature type="binding site" evidence="1">
    <location>
        <position position="535"/>
    </location>
    <ligand>
        <name>Zn(2+)</name>
        <dbReference type="ChEBI" id="CHEBI:29105"/>
        <label>2</label>
        <note>catalytic</note>
    </ligand>
</feature>
<feature type="binding site" evidence="1">
    <location>
        <position position="800"/>
    </location>
    <ligand>
        <name>Ca(2+)</name>
        <dbReference type="ChEBI" id="CHEBI:29108"/>
    </ligand>
</feature>
<feature type="binding site" evidence="1">
    <location>
        <position position="802"/>
    </location>
    <ligand>
        <name>Ca(2+)</name>
        <dbReference type="ChEBI" id="CHEBI:29108"/>
    </ligand>
</feature>
<feature type="binding site" evidence="1">
    <location>
        <position position="804"/>
    </location>
    <ligand>
        <name>Ca(2+)</name>
        <dbReference type="ChEBI" id="CHEBI:29108"/>
    </ligand>
</feature>
<feature type="binding site" evidence="1">
    <location>
        <position position="806"/>
    </location>
    <ligand>
        <name>Ca(2+)</name>
        <dbReference type="ChEBI" id="CHEBI:29108"/>
    </ligand>
</feature>
<feature type="binding site" evidence="1">
    <location>
        <position position="808"/>
    </location>
    <ligand>
        <name>Ca(2+)</name>
        <dbReference type="ChEBI" id="CHEBI:29108"/>
    </ligand>
</feature>
<feature type="site" description="Cleavage" evidence="1">
    <location>
        <begin position="102"/>
        <end position="103"/>
    </location>
</feature>
<feature type="site" description="Essential for catalytic activity" evidence="3">
    <location>
        <position position="915"/>
    </location>
</feature>
<feature type="modified residue" description="Phosphothreonine" evidence="2">
    <location>
        <position position="256"/>
    </location>
</feature>
<feature type="glycosylation site" description="N-linked (GlcNAc...) asparagine" evidence="4">
    <location>
        <position position="179"/>
    </location>
</feature>
<feature type="glycosylation site" description="N-linked (GlcNAc...) asparagine" evidence="4">
    <location>
        <position position="285"/>
    </location>
</feature>
<feature type="glycosylation site" description="N-linked (GlcNAc...) asparagine" evidence="16 17">
    <location>
        <position position="341"/>
    </location>
</feature>
<feature type="glycosylation site" description="N-linked (GlcNAc...) asparagine" evidence="4">
    <location>
        <position position="477"/>
    </location>
</feature>
<feature type="glycosylation site" description="N-linked (GlcNAc...) asparagine" evidence="4">
    <location>
        <position position="585"/>
    </location>
</feature>
<feature type="glycosylation site" description="N-linked (GlcNAc...) asparagine" evidence="17">
    <location>
        <position position="643"/>
    </location>
</feature>
<feature type="glycosylation site" description="N-linked (GlcNAc...) asparagine" evidence="4">
    <location>
        <position position="700"/>
    </location>
</feature>
<feature type="glycosylation site" description="N-linked (GlcNAc...) asparagine" evidence="4">
    <location>
        <position position="731"/>
    </location>
</feature>
<feature type="glycosylation site" description="N-linked (GlcNAc...) asparagine" evidence="17">
    <location>
        <position position="748"/>
    </location>
</feature>
<feature type="disulfide bond" evidence="5">
    <location>
        <begin position="108"/>
        <end position="122"/>
    </location>
</feature>
<feature type="disulfide bond" evidence="5">
    <location>
        <begin position="112"/>
        <end position="140"/>
    </location>
</feature>
<feature type="disulfide bond" evidence="5">
    <location>
        <begin position="120"/>
        <end position="133"/>
    </location>
</feature>
<feature type="disulfide bond" evidence="5">
    <location>
        <begin position="126"/>
        <end position="132"/>
    </location>
</feature>
<feature type="disulfide bond" evidence="5">
    <location>
        <begin position="149"/>
        <end position="166"/>
    </location>
</feature>
<feature type="disulfide bond" evidence="5">
    <location>
        <begin position="154"/>
        <end position="184"/>
    </location>
</feature>
<feature type="disulfide bond" evidence="5">
    <location>
        <begin position="164"/>
        <end position="177"/>
    </location>
</feature>
<feature type="disulfide bond" evidence="5">
    <location>
        <begin position="170"/>
        <end position="176"/>
    </location>
</feature>
<feature type="disulfide bond" evidence="5">
    <location>
        <begin position="195"/>
        <end position="241"/>
    </location>
</feature>
<feature type="disulfide bond" evidence="5">
    <location>
        <begin position="203"/>
        <end position="415"/>
    </location>
</feature>
<feature type="disulfide bond" evidence="5">
    <location>
        <begin position="431"/>
        <end position="530"/>
    </location>
</feature>
<feature type="disulfide bond" evidence="5">
    <location>
        <begin position="480"/>
        <end position="868"/>
    </location>
</feature>
<feature type="disulfide bond" evidence="5">
    <location>
        <begin position="614"/>
        <end position="672"/>
    </location>
</feature>
<feature type="disulfide bond" evidence="5">
    <location>
        <begin position="626"/>
        <end position="726"/>
    </location>
</feature>
<feature type="disulfide bond" evidence="5">
    <location>
        <begin position="628"/>
        <end position="711"/>
    </location>
</feature>
<feature type="disulfide bond" evidence="5">
    <location>
        <begin position="838"/>
        <end position="848"/>
    </location>
</feature>
<feature type="sequence variant" id="VAR_014141" description="In OPLL." evidence="7">
    <original>L</original>
    <variation>P</variation>
    <location>
        <position position="91"/>
    </location>
</feature>
<feature type="sequence variant" id="VAR_077255" description="In ARHR2." evidence="26">
    <original>G</original>
    <variation>D</variation>
    <location>
        <position position="92"/>
    </location>
</feature>
<feature type="sequence variant" id="VAR_081644" description="In COLED; impaired homodimerization." evidence="30">
    <original>C</original>
    <variation>R</variation>
    <location>
        <position position="120"/>
    </location>
</feature>
<feature type="sequence variant" id="VAR_077256" description="In GACI1." evidence="18">
    <original>C</original>
    <variation>R</variation>
    <location>
        <position position="126"/>
    </location>
</feature>
<feature type="sequence variant" id="VAR_077257" description="In COLED; impaired homodimerization." evidence="27 30">
    <original>C</original>
    <variation>R</variation>
    <location>
        <position position="133"/>
    </location>
</feature>
<feature type="sequence variant" id="VAR_070782" description="In COLED; dbSNP:rs397518477." evidence="24">
    <original>C</original>
    <variation>S</variation>
    <location>
        <position position="149"/>
    </location>
</feature>
<feature type="sequence variant" id="VAR_070783" description="In COLED; dbSNP:rs397518476." evidence="24">
    <original>C</original>
    <variation>S</variation>
    <location>
        <position position="164"/>
    </location>
</feature>
<feature type="sequence variant" id="VAR_008873" description="Associated with T2D; decreased nucleotide phosphodiesterase activity; no effect on localization to plasma membrane; dbSNP:rs1044498." evidence="7 8 15 19 28 31">
    <original>K</original>
    <variation>Q</variation>
    <location>
        <position position="173"/>
    </location>
</feature>
<feature type="sequence variant" id="VAR_077258" description="In COLED." evidence="27">
    <original>C</original>
    <variation>S</variation>
    <location>
        <position position="177"/>
    </location>
</feature>
<feature type="sequence variant" id="VAR_070784" description="In COLED; dbSNP:rs397518475." evidence="24">
    <original>C</original>
    <variation>Y</variation>
    <location>
        <position position="177"/>
    </location>
</feature>
<feature type="sequence variant" id="VAR_037432" description="In dbSNP:rs2273411.">
    <original>N</original>
    <variation>S</variation>
    <location>
        <position position="179"/>
    </location>
</feature>
<feature type="sequence variant" id="VAR_077259" description="In GACI1; loss of nucleotide phosphodiesterase activity; loss of localization to plasma membrane; dbSNP:rs763457176." evidence="28">
    <original>C</original>
    <variation>R</variation>
    <location>
        <position position="195"/>
    </location>
</feature>
<feature type="sequence variant" id="VAR_077260" description="In GACI1; loss of nucleotide phosphodiesterase activity; loss of localization to plasma membrane." evidence="28">
    <original>C</original>
    <variation>S</variation>
    <location>
        <position position="195"/>
    </location>
</feature>
<feature type="sequence variant" id="VAR_077261" description="In GACI1; uncertain significance; dbSNP:rs760786509." evidence="18">
    <original>S</original>
    <variation>Y</variation>
    <location>
        <position position="216"/>
    </location>
</feature>
<feature type="sequence variant" id="VAR_077262" description="In GACI1; dbSNP:rs1231182870." evidence="23">
    <original>D</original>
    <variation>V</variation>
    <location>
        <position position="218"/>
    </location>
</feature>
<feature type="sequence variant" id="VAR_077263" description="In ARHR2; uncertain significance." evidence="26">
    <original>G</original>
    <variation>R</variation>
    <location>
        <position position="219"/>
    </location>
</feature>
<feature type="sequence variant" id="VAR_077264" description="In GACI1; uncertain significance." evidence="18">
    <original>G</original>
    <variation>E</variation>
    <location>
        <position position="242"/>
    </location>
</feature>
<feature type="sequence variant" id="VAR_067910" description="In GACI1; uncertain significance; dbSNP:rs754659608." evidence="13 18">
    <original>P</original>
    <variation>L</variation>
    <location>
        <position position="250"/>
    </location>
</feature>
<feature type="sequence variant" id="VAR_067911" description="In GACI1." evidence="13">
    <location>
        <position position="252"/>
    </location>
</feature>
<feature type="sequence variant" id="VAR_063719" description="In ARHR2; dbSNP:rs121908248." evidence="21">
    <original>G</original>
    <variation>V</variation>
    <location>
        <position position="266"/>
    </location>
</feature>
<feature type="sequence variant" id="VAR_014142" description="In dbSNP:rs17847050." evidence="7">
    <original>Y</original>
    <variation>H</variation>
    <location>
        <position position="268"/>
    </location>
</feature>
<feature type="sequence variant" id="VAR_077265" description="In GACI1; uncertain significance; dbSNP:rs143771474." evidence="18">
    <original>D</original>
    <variation>N</variation>
    <location>
        <position position="276"/>
    </location>
</feature>
<feature type="sequence variant" id="VAR_014143" description="In OPLL; dbSNP:rs190947144." evidence="7">
    <original>S</original>
    <variation>F</variation>
    <location>
        <position position="287"/>
    </location>
</feature>
<feature type="sequence variant" id="VAR_077266" description="In GACI1; loss of nucleotide phosphodiesterase activity; loss of localization to plasma membrane." evidence="28">
    <original>Y</original>
    <variation>C</variation>
    <location>
        <position position="301"/>
    </location>
</feature>
<feature type="sequence variant" id="VAR_067912" description="In GACI1; loss of nucleotide phosphodiesterase activity; no effect on localization to plasma membrane; dbSNP:rs374270497." evidence="13 18 28">
    <original>P</original>
    <variation>T</variation>
    <location>
        <position position="305"/>
    </location>
</feature>
<feature type="sequence variant" id="VAR_037433" description="In GACI1; dbSNP:rs121918025." evidence="13 14 18">
    <original>G</original>
    <variation>V</variation>
    <location>
        <position position="342"/>
    </location>
</feature>
<feature type="sequence variant" id="VAR_077267" description="In GACI1; uncertain significance; dbSNP:rs764735802." evidence="18">
    <original>R</original>
    <variation>K</variation>
    <location>
        <position position="349"/>
    </location>
</feature>
<feature type="sequence variant" id="VAR_037434" description="In GACI1; uncertain significance; dbSNP:rs121918026." evidence="13 14 18">
    <original>Y</original>
    <variation>F</variation>
    <location>
        <position position="371"/>
    </location>
</feature>
<feature type="sequence variant" id="VAR_077268" description="In GACI1; dbSNP:rs765071179." evidence="18">
    <original>R</original>
    <variation>Q</variation>
    <location>
        <position position="456"/>
    </location>
</feature>
<feature type="sequence variant" id="VAR_077269" description="In GACI1; decreased nucleotide phosphodiesterase activity; no effect on localization to plasma membrane; dbSNP:rs148462924." evidence="18 28">
    <original>Y</original>
    <variation>C</variation>
    <location>
        <position position="471"/>
    </location>
</feature>
<feature type="sequence variant" id="VAR_077270" description="In GACI1; uncertain significance; dbSNP:rs373044722." evidence="18">
    <original>R</original>
    <variation>W</variation>
    <location>
        <position position="481"/>
    </location>
</feature>
<feature type="sequence variant" id="VAR_077271" description="In GACI1." evidence="18">
    <original>H</original>
    <variation>P</variation>
    <location>
        <position position="500"/>
    </location>
</feature>
<feature type="sequence variant" id="VAR_077272" description="In GACI1; decreased nucleotide phosphodiesterase activity; no effect on localization to plasma membrane." evidence="18 28">
    <original>S</original>
    <variation>R</variation>
    <location>
        <position position="504"/>
    </location>
</feature>
<feature type="sequence variant" id="VAR_077273" description="In GACI1; loss of nucleotide phosphodiesterase activity; no effect on localization to plasma membrane; dbSNP:rs1243920034." evidence="18 28">
    <original>Y</original>
    <variation>C</variation>
    <location>
        <position position="513"/>
    </location>
</feature>
<feature type="sequence variant" id="VAR_067913" description="In GACI1; loss of nucleotide phosphodiesterase activity; no effect on localization to plasma membrane; dbSNP:rs387906673." evidence="22 28">
    <original>D</original>
    <variation>H</variation>
    <location>
        <position position="538"/>
    </location>
</feature>
<feature type="sequence variant" id="VAR_077274" description="In GACI1; dbSNP:rs140248167." evidence="18">
    <original>Y</original>
    <variation>C</variation>
    <location>
        <position position="570"/>
    </location>
</feature>
<feature type="sequence variant" id="VAR_018514" description="In GACI1; uncertain significance; dbSNP:rs121918024." evidence="11 18">
    <original>L</original>
    <variation>F</variation>
    <location>
        <position position="579"/>
    </location>
</feature>
<feature type="sequence variant" id="VAR_067914" description="In GACI1; loss of nucleotide phosphodiesterase activity; loss of localization to plasma membrane; dbSNP:rs777367269." evidence="22 28">
    <original>G</original>
    <variation>R</variation>
    <location>
        <position position="586"/>
    </location>
</feature>
<feature type="sequence variant" id="VAR_077275" description="In dbSNP:rs79079368." evidence="18">
    <original>L</original>
    <variation>V</variation>
    <location>
        <position position="611"/>
    </location>
</feature>
<feature type="sequence variant" id="VAR_077276" description="In GACI1; decreased nucleotide phosphodiesterase activity; no effect on localization to plasma membrane; dbSNP:rs143393727." evidence="18 28">
    <original>Y</original>
    <variation>C</variation>
    <location>
        <position position="659"/>
    </location>
</feature>
<feature type="sequence variant" id="VAR_077277" description="No effect on nucleotide phosphodiesterase activity; no effect on localization to plasma membrane; dbSNP:rs115371819." evidence="18 28">
    <original>E</original>
    <variation>K</variation>
    <location>
        <position position="668"/>
    </location>
</feature>
<feature type="sequence variant" id="VAR_077278" description="In GACI1." evidence="18">
    <original>C</original>
    <variation>R</variation>
    <location>
        <position position="726"/>
    </location>
</feature>
<feature type="sequence variant" id="VAR_018515" description="Decreased nucleotide phosphodiesterase activity; no effect on localization to plasma membrane; dbSNP:rs28933977." evidence="11 13 18 28">
    <original>R</original>
    <variation>C</variation>
    <location>
        <position position="774"/>
    </location>
</feature>
<feature type="sequence variant" id="VAR_077279" description="In GACI1; decreased nucleotide phosphodiesterase activity; no effect on localization to plasma membrane; dbSNP:rs147346173." evidence="18 28">
    <original>H</original>
    <variation>R</variation>
    <location>
        <position position="777"/>
    </location>
</feature>
<feature type="sequence variant" id="VAR_014144" description="In dbSNP:rs1805138." evidence="7">
    <original>T</original>
    <variation>P</variation>
    <location>
        <position position="779"/>
    </location>
</feature>
<feature type="sequence variant" id="VAR_077280" description="In ARHR2 and GACI1; dbSNP:rs370184526." evidence="18 26">
    <original>N</original>
    <variation>S</variation>
    <location>
        <position position="792"/>
    </location>
</feature>
<feature type="sequence variant" id="VAR_077281" description="In GACI1." evidence="18">
    <original>D</original>
    <variation>H</variation>
    <location>
        <position position="804"/>
    </location>
</feature>
<feature type="sequence variant" id="VAR_077282" description="Decreased nucleotide phosphodiesterase activity; no effect on localization to plasma membrane; dbSNP:rs367759638." evidence="18 28">
    <original>R</original>
    <variation>H</variation>
    <location>
        <position position="821"/>
    </location>
</feature>
<feature type="sequence variant" id="VAR_037435" description="In dbSNP:rs8192683.">
    <original>R</original>
    <variation>T</variation>
    <location>
        <position position="886"/>
    </location>
</feature>
<feature type="sequence variant" id="VAR_077283" description="In GACI1; loss of nucleotide phosphodiesterase activity; loss of localization to plasma membrane; dbSNP:rs184483616." evidence="18 28">
    <original>R</original>
    <variation>W</variation>
    <location>
        <position position="888"/>
    </location>
</feature>
<feature type="sequence variant" id="VAR_063720" description="In ARHR2; loss of activity; dbSNP:rs121908249." evidence="20">
    <original>Y</original>
    <variation>S</variation>
    <location>
        <position position="901"/>
    </location>
</feature>
<feature type="turn" evidence="45">
    <location>
        <begin position="151"/>
        <end position="155"/>
    </location>
</feature>
<feature type="strand" evidence="45">
    <location>
        <begin position="163"/>
        <end position="165"/>
    </location>
</feature>
<feature type="helix" evidence="45">
    <location>
        <begin position="168"/>
        <end position="173"/>
    </location>
</feature>
<feature type="helix" evidence="45">
    <location>
        <begin position="180"/>
        <end position="183"/>
    </location>
</feature>
<feature type="helix" evidence="46">
    <location>
        <begin position="190"/>
        <end position="192"/>
    </location>
</feature>
<feature type="strand" evidence="46">
    <location>
        <begin position="212"/>
        <end position="217"/>
    </location>
</feature>
<feature type="helix" evidence="46">
    <location>
        <begin position="222"/>
        <end position="227"/>
    </location>
</feature>
<feature type="helix" evidence="46">
    <location>
        <begin position="228"/>
        <end position="231"/>
    </location>
</feature>
<feature type="helix" evidence="46">
    <location>
        <begin position="233"/>
        <end position="240"/>
    </location>
</feature>
<feature type="strand" evidence="46">
    <location>
        <begin position="242"/>
        <end position="246"/>
    </location>
</feature>
<feature type="helix" evidence="46">
    <location>
        <begin position="256"/>
        <end position="265"/>
    </location>
</feature>
<feature type="helix" evidence="46">
    <location>
        <begin position="269"/>
        <end position="272"/>
    </location>
</feature>
<feature type="strand" evidence="46">
    <location>
        <begin position="276"/>
        <end position="281"/>
    </location>
</feature>
<feature type="turn" evidence="46">
    <location>
        <begin position="282"/>
        <end position="285"/>
    </location>
</feature>
<feature type="strand" evidence="46">
    <location>
        <begin position="286"/>
        <end position="288"/>
    </location>
</feature>
<feature type="strand" evidence="46">
    <location>
        <begin position="290"/>
        <end position="292"/>
    </location>
</feature>
<feature type="helix" evidence="46">
    <location>
        <begin position="293"/>
        <end position="296"/>
    </location>
</feature>
<feature type="helix" evidence="46">
    <location>
        <begin position="298"/>
        <end position="300"/>
    </location>
</feature>
<feature type="helix" evidence="46">
    <location>
        <begin position="306"/>
        <end position="312"/>
    </location>
</feature>
<feature type="turn" evidence="46">
    <location>
        <begin position="323"/>
        <end position="326"/>
    </location>
</feature>
<feature type="helix" evidence="46">
    <location>
        <begin position="346"/>
        <end position="357"/>
    </location>
</feature>
<feature type="strand" evidence="46">
    <location>
        <begin position="366"/>
        <end position="372"/>
    </location>
</feature>
<feature type="helix" evidence="46">
    <location>
        <begin position="376"/>
        <end position="382"/>
    </location>
</feature>
<feature type="strand" evidence="46">
    <location>
        <begin position="384"/>
        <end position="386"/>
    </location>
</feature>
<feature type="helix" evidence="46">
    <location>
        <begin position="387"/>
        <end position="409"/>
    </location>
</feature>
<feature type="turn" evidence="46">
    <location>
        <begin position="413"/>
        <end position="415"/>
    </location>
</feature>
<feature type="strand" evidence="46">
    <location>
        <begin position="417"/>
        <end position="421"/>
    </location>
</feature>
<feature type="helix" evidence="46">
    <location>
        <begin position="438"/>
        <end position="441"/>
    </location>
</feature>
<feature type="strand" evidence="46">
    <location>
        <begin position="446"/>
        <end position="450"/>
    </location>
</feature>
<feature type="strand" evidence="46">
    <location>
        <begin position="456"/>
        <end position="461"/>
    </location>
</feature>
<feature type="turn" evidence="46">
    <location>
        <begin position="462"/>
        <end position="468"/>
    </location>
</feature>
<feature type="helix" evidence="46">
    <location>
        <begin position="471"/>
        <end position="477"/>
    </location>
</feature>
<feature type="turn" evidence="46">
    <location>
        <begin position="478"/>
        <end position="480"/>
    </location>
</feature>
<feature type="strand" evidence="46">
    <location>
        <begin position="486"/>
        <end position="491"/>
    </location>
</feature>
<feature type="strand" evidence="46">
    <location>
        <begin position="509"/>
        <end position="514"/>
    </location>
</feature>
<feature type="strand" evidence="46">
    <location>
        <begin position="520"/>
        <end position="523"/>
    </location>
</feature>
<feature type="strand" evidence="46">
    <location>
        <begin position="530"/>
        <end position="534"/>
    </location>
</feature>
<feature type="helix" evidence="46">
    <location>
        <begin position="542"/>
        <end position="544"/>
    </location>
</feature>
<feature type="strand" evidence="46">
    <location>
        <begin position="548"/>
        <end position="552"/>
    </location>
</feature>
<feature type="helix" evidence="46">
    <location>
        <begin position="566"/>
        <end position="568"/>
    </location>
</feature>
<feature type="helix" evidence="46">
    <location>
        <begin position="569"/>
        <end position="576"/>
    </location>
</feature>
<feature type="turn" evidence="46">
    <location>
        <begin position="588"/>
        <end position="591"/>
    </location>
</feature>
<feature type="helix" evidence="46">
    <location>
        <begin position="592"/>
        <end position="594"/>
    </location>
</feature>
<feature type="strand" evidence="46">
    <location>
        <begin position="595"/>
        <end position="597"/>
    </location>
</feature>
<feature type="helix" evidence="46">
    <location>
        <begin position="638"/>
        <end position="641"/>
    </location>
</feature>
<feature type="helix" evidence="46">
    <location>
        <begin position="646"/>
        <end position="656"/>
    </location>
</feature>
<feature type="strand" evidence="46">
    <location>
        <begin position="671"/>
        <end position="675"/>
    </location>
</feature>
<feature type="strand" evidence="46">
    <location>
        <begin position="677"/>
        <end position="684"/>
    </location>
</feature>
<feature type="turn" evidence="46">
    <location>
        <begin position="685"/>
        <end position="688"/>
    </location>
</feature>
<feature type="strand" evidence="46">
    <location>
        <begin position="689"/>
        <end position="697"/>
    </location>
</feature>
<feature type="helix" evidence="46">
    <location>
        <begin position="722"/>
        <end position="724"/>
    </location>
</feature>
<feature type="helix" evidence="46">
    <location>
        <begin position="726"/>
        <end position="729"/>
    </location>
</feature>
<feature type="strand" evidence="46">
    <location>
        <begin position="736"/>
        <end position="738"/>
    </location>
</feature>
<feature type="strand" evidence="46">
    <location>
        <begin position="745"/>
        <end position="751"/>
    </location>
</feature>
<feature type="helix" evidence="46">
    <location>
        <begin position="755"/>
        <end position="757"/>
    </location>
</feature>
<feature type="strand" evidence="46">
    <location>
        <begin position="763"/>
        <end position="765"/>
    </location>
</feature>
<feature type="helix" evidence="46">
    <location>
        <begin position="769"/>
        <end position="788"/>
    </location>
</feature>
<feature type="strand" evidence="46">
    <location>
        <begin position="791"/>
        <end position="798"/>
    </location>
</feature>
<feature type="strand" evidence="46">
    <location>
        <begin position="804"/>
        <end position="806"/>
    </location>
</feature>
<feature type="helix" evidence="46">
    <location>
        <begin position="810"/>
        <end position="815"/>
    </location>
</feature>
<feature type="strand" evidence="46">
    <location>
        <begin position="818"/>
        <end position="820"/>
    </location>
</feature>
<feature type="strand" evidence="46">
    <location>
        <begin position="823"/>
        <end position="825"/>
    </location>
</feature>
<feature type="strand" evidence="46">
    <location>
        <begin position="829"/>
        <end position="840"/>
    </location>
</feature>
<feature type="helix" evidence="46">
    <location>
        <begin position="845"/>
        <end position="847"/>
    </location>
</feature>
<feature type="strand" evidence="46">
    <location>
        <begin position="849"/>
        <end position="859"/>
    </location>
</feature>
<feature type="turn" evidence="46">
    <location>
        <begin position="865"/>
        <end position="868"/>
    </location>
</feature>
<feature type="helix" evidence="46">
    <location>
        <begin position="874"/>
        <end position="884"/>
    </location>
</feature>
<feature type="helix" evidence="46">
    <location>
        <begin position="889"/>
        <end position="896"/>
    </location>
</feature>
<feature type="helix" evidence="46">
    <location>
        <begin position="908"/>
        <end position="915"/>
    </location>
</feature>
<proteinExistence type="evidence at protein level"/>
<reference key="1">
    <citation type="journal article" date="1990" name="J. Biol. Chem.">
        <title>Plasma cell membrane glycoprotein PC-1. cDNA cloning of the human molecule, amino acid sequence, and chromosomal location.</title>
        <authorList>
            <person name="Buckley M.F."/>
            <person name="Loveland K.A."/>
            <person name="McKinstry W.J."/>
            <person name="Garson O.M."/>
            <person name="Goding J.W."/>
        </authorList>
    </citation>
    <scope>NUCLEOTIDE SEQUENCE [MRNA]</scope>
    <source>
        <tissue>Skin fibroblast</tissue>
    </source>
</reference>
<reference key="2">
    <citation type="journal article" date="1992" name="Arch. Biochem. Biophys.">
        <title>Molecular cloning of cDNAs for human fibroblast nucleotide pyrophosphatase.</title>
        <authorList>
            <person name="Funakoshi I."/>
            <person name="Kato H."/>
            <person name="Horie K."/>
            <person name="Yano T."/>
            <person name="Hori Y."/>
            <person name="Kobayashi H."/>
            <person name="Inoue T."/>
            <person name="Suzuki H."/>
            <person name="Fukui S."/>
            <person name="Tsukahara M."/>
            <person name="Kajii T."/>
            <person name="Yamashina I."/>
        </authorList>
    </citation>
    <scope>NUCLEOTIDE SEQUENCE [MRNA]</scope>
    <scope>PARTIAL PROTEIN SEQUENCE</scope>
    <source>
        <tissue>Skin fibroblast</tissue>
    </source>
</reference>
<reference key="3">
    <citation type="submission" date="1999-04" db="EMBL/GenBank/DDBJ databases">
        <title>Genomic structure of the human PC1 gene.</title>
        <authorList>
            <person name="Bozzali M."/>
            <person name="Pizzuti A."/>
            <person name="Trischitta E."/>
        </authorList>
    </citation>
    <scope>NUCLEOTIDE SEQUENCE [GENOMIC DNA]</scope>
</reference>
<reference key="4">
    <citation type="journal article" date="2003" name="Nature">
        <title>The DNA sequence and analysis of human chromosome 6.</title>
        <authorList>
            <person name="Mungall A.J."/>
            <person name="Palmer S.A."/>
            <person name="Sims S.K."/>
            <person name="Edwards C.A."/>
            <person name="Ashurst J.L."/>
            <person name="Wilming L."/>
            <person name="Jones M.C."/>
            <person name="Horton R."/>
            <person name="Hunt S.E."/>
            <person name="Scott C.E."/>
            <person name="Gilbert J.G.R."/>
            <person name="Clamp M.E."/>
            <person name="Bethel G."/>
            <person name="Milne S."/>
            <person name="Ainscough R."/>
            <person name="Almeida J.P."/>
            <person name="Ambrose K.D."/>
            <person name="Andrews T.D."/>
            <person name="Ashwell R.I.S."/>
            <person name="Babbage A.K."/>
            <person name="Bagguley C.L."/>
            <person name="Bailey J."/>
            <person name="Banerjee R."/>
            <person name="Barker D.J."/>
            <person name="Barlow K.F."/>
            <person name="Bates K."/>
            <person name="Beare D.M."/>
            <person name="Beasley H."/>
            <person name="Beasley O."/>
            <person name="Bird C.P."/>
            <person name="Blakey S.E."/>
            <person name="Bray-Allen S."/>
            <person name="Brook J."/>
            <person name="Brown A.J."/>
            <person name="Brown J.Y."/>
            <person name="Burford D.C."/>
            <person name="Burrill W."/>
            <person name="Burton J."/>
            <person name="Carder C."/>
            <person name="Carter N.P."/>
            <person name="Chapman J.C."/>
            <person name="Clark S.Y."/>
            <person name="Clark G."/>
            <person name="Clee C.M."/>
            <person name="Clegg S."/>
            <person name="Cobley V."/>
            <person name="Collier R.E."/>
            <person name="Collins J.E."/>
            <person name="Colman L.K."/>
            <person name="Corby N.R."/>
            <person name="Coville G.J."/>
            <person name="Culley K.M."/>
            <person name="Dhami P."/>
            <person name="Davies J."/>
            <person name="Dunn M."/>
            <person name="Earthrowl M.E."/>
            <person name="Ellington A.E."/>
            <person name="Evans K.A."/>
            <person name="Faulkner L."/>
            <person name="Francis M.D."/>
            <person name="Frankish A."/>
            <person name="Frankland J."/>
            <person name="French L."/>
            <person name="Garner P."/>
            <person name="Garnett J."/>
            <person name="Ghori M.J."/>
            <person name="Gilby L.M."/>
            <person name="Gillson C.J."/>
            <person name="Glithero R.J."/>
            <person name="Grafham D.V."/>
            <person name="Grant M."/>
            <person name="Gribble S."/>
            <person name="Griffiths C."/>
            <person name="Griffiths M.N.D."/>
            <person name="Hall R."/>
            <person name="Halls K.S."/>
            <person name="Hammond S."/>
            <person name="Harley J.L."/>
            <person name="Hart E.A."/>
            <person name="Heath P.D."/>
            <person name="Heathcott R."/>
            <person name="Holmes S.J."/>
            <person name="Howden P.J."/>
            <person name="Howe K.L."/>
            <person name="Howell G.R."/>
            <person name="Huckle E."/>
            <person name="Humphray S.J."/>
            <person name="Humphries M.D."/>
            <person name="Hunt A.R."/>
            <person name="Johnson C.M."/>
            <person name="Joy A.A."/>
            <person name="Kay M."/>
            <person name="Keenan S.J."/>
            <person name="Kimberley A.M."/>
            <person name="King A."/>
            <person name="Laird G.K."/>
            <person name="Langford C."/>
            <person name="Lawlor S."/>
            <person name="Leongamornlert D.A."/>
            <person name="Leversha M."/>
            <person name="Lloyd C.R."/>
            <person name="Lloyd D.M."/>
            <person name="Loveland J.E."/>
            <person name="Lovell J."/>
            <person name="Martin S."/>
            <person name="Mashreghi-Mohammadi M."/>
            <person name="Maslen G.L."/>
            <person name="Matthews L."/>
            <person name="McCann O.T."/>
            <person name="McLaren S.J."/>
            <person name="McLay K."/>
            <person name="McMurray A."/>
            <person name="Moore M.J.F."/>
            <person name="Mullikin J.C."/>
            <person name="Niblett D."/>
            <person name="Nickerson T."/>
            <person name="Novik K.L."/>
            <person name="Oliver K."/>
            <person name="Overton-Larty E.K."/>
            <person name="Parker A."/>
            <person name="Patel R."/>
            <person name="Pearce A.V."/>
            <person name="Peck A.I."/>
            <person name="Phillimore B.J.C.T."/>
            <person name="Phillips S."/>
            <person name="Plumb R.W."/>
            <person name="Porter K.M."/>
            <person name="Ramsey Y."/>
            <person name="Ranby S.A."/>
            <person name="Rice C.M."/>
            <person name="Ross M.T."/>
            <person name="Searle S.M."/>
            <person name="Sehra H.K."/>
            <person name="Sheridan E."/>
            <person name="Skuce C.D."/>
            <person name="Smith S."/>
            <person name="Smith M."/>
            <person name="Spraggon L."/>
            <person name="Squares S.L."/>
            <person name="Steward C.A."/>
            <person name="Sycamore N."/>
            <person name="Tamlyn-Hall G."/>
            <person name="Tester J."/>
            <person name="Theaker A.J."/>
            <person name="Thomas D.W."/>
            <person name="Thorpe A."/>
            <person name="Tracey A."/>
            <person name="Tromans A."/>
            <person name="Tubby B."/>
            <person name="Wall M."/>
            <person name="Wallis J.M."/>
            <person name="West A.P."/>
            <person name="White S.S."/>
            <person name="Whitehead S.L."/>
            <person name="Whittaker H."/>
            <person name="Wild A."/>
            <person name="Willey D.J."/>
            <person name="Wilmer T.E."/>
            <person name="Wood J.M."/>
            <person name="Wray P.W."/>
            <person name="Wyatt J.C."/>
            <person name="Young L."/>
            <person name="Younger R.M."/>
            <person name="Bentley D.R."/>
            <person name="Coulson A."/>
            <person name="Durbin R.M."/>
            <person name="Hubbard T."/>
            <person name="Sulston J.E."/>
            <person name="Dunham I."/>
            <person name="Rogers J."/>
            <person name="Beck S."/>
        </authorList>
    </citation>
    <scope>NUCLEOTIDE SEQUENCE [LARGE SCALE GENOMIC DNA]</scope>
</reference>
<reference key="5">
    <citation type="journal article" date="2004" name="Genome Res.">
        <title>The status, quality, and expansion of the NIH full-length cDNA project: the Mammalian Gene Collection (MGC).</title>
        <authorList>
            <consortium name="The MGC Project Team"/>
        </authorList>
    </citation>
    <scope>NUCLEOTIDE SEQUENCE [LARGE SCALE MRNA]</scope>
    <source>
        <tissue>Placenta</tissue>
    </source>
</reference>
<reference key="6">
    <citation type="journal article" date="1999" name="Diabetes">
        <title>A polymorphism (K121Q) of the human glycoprotein PC-1 gene coding region is strongly associated with insulin resistance.</title>
        <authorList>
            <person name="Pizzuti A."/>
            <person name="Frittitta L."/>
            <person name="Argiolas A."/>
            <person name="Baratta R."/>
            <person name="Goldfine I.D."/>
            <person name="Bozzali M."/>
            <person name="Ercolino T."/>
            <person name="Scarlato G."/>
            <person name="Iacoviello L."/>
            <person name="Vigneri R."/>
            <person name="Tassi V."/>
            <person name="Trischitta V."/>
        </authorList>
    </citation>
    <scope>NUCLEOTIDE SEQUENCE [GENOMIC DNA] OF 145-185</scope>
    <scope>VARIANT GLN-173</scope>
</reference>
<reference key="7">
    <citation type="journal article" date="1994" name="Eur. J. Biochem.">
        <title>Biochemical characterization of human PC-1, an enzyme possessing alkaline phosphodiesterase I and nucleotide pyrophosphatase activities.</title>
        <authorList>
            <person name="Belli S.I."/>
            <person name="Goding J.W."/>
        </authorList>
    </citation>
    <scope>SUBCELLULAR LOCATION</scope>
    <scope>TOPOLOGY</scope>
    <scope>CATALYTIC ACTIVITY</scope>
    <scope>FUNCTION</scope>
    <scope>GLYCOSYLATION</scope>
</reference>
<reference key="8">
    <citation type="journal article" date="1995" name="Eur. J. Biochem.">
        <title>Autophosphorylation of PC-1 (alkaline phosphodiesterase I/nucleotide pyrophosphatase) and analysis of the active site.</title>
        <authorList>
            <person name="Belli S.I."/>
            <person name="Mercuri F.A."/>
            <person name="Sali A."/>
            <person name="Goding J.W."/>
        </authorList>
    </citation>
    <scope>ACTIVE SITE</scope>
</reference>
<reference key="9">
    <citation type="journal article" date="1997" name="Genomics">
        <title>Molecular cloning and chromosomal localization of PD-Ibeta (PDNP3), a new member of the human phosphodiesterase I genes.</title>
        <authorList>
            <person name="Piao J.-H."/>
            <person name="Goding J.W."/>
            <person name="Nakamura H."/>
            <person name="Sano K."/>
        </authorList>
    </citation>
    <scope>TISSUE SPECIFICITY</scope>
</reference>
<reference key="10">
    <citation type="journal article" date="2000" name="Am. J. Physiol.">
        <title>Osteoblast tissue-nonspecific alkaline phosphatase antagonizes and regulates PC-1.</title>
        <authorList>
            <person name="Johnson K.A."/>
            <person name="Hessle L."/>
            <person name="Vaingankar S."/>
            <person name="Wennberg C."/>
            <person name="Mauro S."/>
            <person name="Narisawa S."/>
            <person name="Goding J.W."/>
            <person name="Sano K."/>
            <person name="Millan J.L."/>
            <person name="Terkeltaub R."/>
        </authorList>
    </citation>
    <scope>FUNCTION</scope>
</reference>
<reference key="11">
    <citation type="journal article" date="2000" name="Diabetes">
        <title>Membrane glycoprotein PC-1 inhibition of insulin receptor function occurs via direct interaction with the receptor alpha-subunit.</title>
        <authorList>
            <person name="Maddux B.A."/>
            <person name="Goldfine I.D."/>
        </authorList>
    </citation>
    <scope>INTERACTION WITH INSR</scope>
    <scope>FUNCTION IN INHIBITION OF INSR KINASE ACTIVITY</scope>
</reference>
<reference key="12">
    <citation type="journal article" date="2001" name="Mol. Biol. Cell">
        <title>Characterization of a di-leucine-based signal in the cytoplasmic tail of the nucleotide-pyrophosphatase NPP1 that mediates basolateral targeting but not endocytosis.</title>
        <authorList>
            <person name="Bello V."/>
            <person name="Goding J.W."/>
            <person name="Greengrass V."/>
            <person name="Sali A."/>
            <person name="Dubljevic V."/>
            <person name="Lenoir C."/>
            <person name="Trugnan G."/>
            <person name="Maurice M."/>
        </authorList>
    </citation>
    <scope>CHARACTERIZATION</scope>
    <scope>SUBCELLULAR LOCATION</scope>
</reference>
<reference key="13">
    <citation type="journal article" date="2004" name="Cancer Lett.">
        <title>Expression and localization of ecto-nucleotide pyrophosphatase/phosphodiesterase I-1 (E-NPP1/PC-1) and -3 (E-NPP3/CD203c/PD-Ibeta/B10/gp130(RB13-6)) in inflammatory and neoplastic bile duct diseases.</title>
        <authorList>
            <person name="Yano Y."/>
            <person name="Hayashi Y."/>
            <person name="Sano K."/>
            <person name="Nagano H."/>
            <person name="Nakaji M."/>
            <person name="Seo Y."/>
            <person name="Ninomiya T."/>
            <person name="Yoon S."/>
            <person name="Yokozaki H."/>
            <person name="Kasuga M."/>
        </authorList>
    </citation>
    <scope>SUBCELLULAR LOCATION</scope>
</reference>
<reference key="14">
    <citation type="journal article" date="2009" name="J. Proteome Res.">
        <title>Glycoproteomics analysis of human liver tissue by combination of multiple enzyme digestion and hydrazide chemistry.</title>
        <authorList>
            <person name="Chen R."/>
            <person name="Jiang X."/>
            <person name="Sun D."/>
            <person name="Han G."/>
            <person name="Wang F."/>
            <person name="Ye M."/>
            <person name="Wang L."/>
            <person name="Zou H."/>
        </authorList>
    </citation>
    <scope>GLYCOSYLATION [LARGE SCALE ANALYSIS] AT ASN-341</scope>
    <source>
        <tissue>Liver</tissue>
    </source>
</reference>
<reference key="15">
    <citation type="journal article" date="2009" name="Nat. Biotechnol.">
        <title>Mass-spectrometric identification and relative quantification of N-linked cell surface glycoproteins.</title>
        <authorList>
            <person name="Wollscheid B."/>
            <person name="Bausch-Fluck D."/>
            <person name="Henderson C."/>
            <person name="O'Brien R."/>
            <person name="Bibel M."/>
            <person name="Schiess R."/>
            <person name="Aebersold R."/>
            <person name="Watts J.D."/>
        </authorList>
    </citation>
    <scope>GLYCOSYLATION [LARGE SCALE ANALYSIS] AT ASN-341; ASN-643 AND ASN-748</scope>
    <source>
        <tissue>Leukemic T-cell</tissue>
    </source>
</reference>
<reference key="16">
    <citation type="journal article" date="2014" name="J. Proteomics">
        <title>An enzyme assisted RP-RPLC approach for in-depth analysis of human liver phosphoproteome.</title>
        <authorList>
            <person name="Bian Y."/>
            <person name="Song C."/>
            <person name="Cheng K."/>
            <person name="Dong M."/>
            <person name="Wang F."/>
            <person name="Huang J."/>
            <person name="Sun D."/>
            <person name="Wang L."/>
            <person name="Ye M."/>
            <person name="Zou H."/>
        </authorList>
    </citation>
    <scope>IDENTIFICATION BY MASS SPECTROMETRY [LARGE SCALE ANALYSIS]</scope>
    <source>
        <tissue>Liver</tissue>
    </source>
</reference>
<reference key="17">
    <citation type="journal article" date="2014" name="Nat. Chem. Biol.">
        <title>Hydrolysis of 2'3'-cGAMP by ENPP1 and design of nonhydrolyzable analogs.</title>
        <authorList>
            <person name="Li L."/>
            <person name="Yin Q."/>
            <person name="Kuss P."/>
            <person name="Maliga Z."/>
            <person name="Millan J.L."/>
            <person name="Wu H."/>
            <person name="Mitchison T.J."/>
        </authorList>
    </citation>
    <scope>FUNCTION</scope>
    <scope>CATALYTIC ACTIVITY</scope>
    <scope>BIOPHYSICOCHEMICAL PROPERTIES</scope>
</reference>
<reference key="18">
    <citation type="journal article" date="2017" name="Biochim. Biophys. Acta">
        <title>The promiscuous ectonucleotidase NPP1: molecular insights into substrate binding and hydrolysis.</title>
        <authorList>
            <person name="Namasivayam V."/>
            <person name="Lee S.Y."/>
            <person name="Mueller C.E."/>
        </authorList>
    </citation>
    <scope>FUNCTION</scope>
    <scope>CATALYTIC ACTIVITY</scope>
    <scope>BIOPHYSICOCHEMICAL PROPERTIES</scope>
</reference>
<reference key="19">
    <citation type="journal article" date="2022" name="J. Bone Miner. Res.">
        <title>The Mineralization Regulator ANKH Mediates Cellular Efflux of ATP, Not Pyrophosphate.</title>
        <authorList>
            <person name="Szeri F."/>
            <person name="Niaziorimi F."/>
            <person name="Donnelly S."/>
            <person name="Fariha N."/>
            <person name="Tertyshnaia M."/>
            <person name="Patel D."/>
            <person name="Lundkvist S."/>
            <person name="van de Wetering K."/>
        </authorList>
    </citation>
    <scope>FUNCTION</scope>
    <scope>CATALYTIC ACTIVITY</scope>
</reference>
<reference key="20">
    <citation type="submission" date="2007-10" db="PDB data bank">
        <title>Solution structure of the somatomedin B domain of human ectonucleotide pyrophosphatase/phosphodiesterase family member.</title>
        <authorList>
            <consortium name="RIKEN structural genomics initiative (RSGI)"/>
        </authorList>
    </citation>
    <scope>STRUCTURE BY NMR OF 147-189</scope>
</reference>
<reference key="21">
    <citation type="journal article" date="1999" name="Hum. Genet.">
        <title>Association of the human NPPS gene with ossification of the posterior longitudinal ligament of the spine (OPLL).</title>
        <authorList>
            <person name="Nakamura I."/>
            <person name="Ikegawa S."/>
            <person name="Okawa A."/>
            <person name="Okuda S."/>
            <person name="Koshizuka Y."/>
            <person name="Kawaguchi H."/>
            <person name="Nakamura K."/>
            <person name="Koyama T."/>
            <person name="Goto S."/>
            <person name="Toguchida J."/>
            <person name="Matsushita M."/>
            <person name="Ochi T."/>
            <person name="Takaoka K."/>
            <person name="Nakamura Y."/>
        </authorList>
    </citation>
    <scope>VARIANTS OPLL PRO-91 AND PHE-287</scope>
    <scope>VARIANTS GLN-173; HIS-268 AND PRO-779</scope>
</reference>
<reference key="22">
    <citation type="journal article" date="2003" name="Nat. Genet.">
        <title>Mutations in ENPP1 are associated with 'idiopathic' infantile arterial calcification.</title>
        <authorList>
            <person name="Rutsch F."/>
            <person name="Ruf N."/>
            <person name="Vaingankar S."/>
            <person name="Toliat M.R."/>
            <person name="Suk A."/>
            <person name="Hohne W."/>
            <person name="Schauer G."/>
            <person name="Lehmann M."/>
            <person name="Roscioli T."/>
            <person name="Schnabel D."/>
            <person name="Epplen J.T."/>
            <person name="Knisely A."/>
            <person name="Superti-Furga A."/>
            <person name="McGill J."/>
            <person name="Filippone M."/>
            <person name="Sinaiko A.R."/>
            <person name="Vallance H."/>
            <person name="Hinrichs B."/>
            <person name="Smith W."/>
            <person name="Ferre M."/>
            <person name="Terkeltaub R."/>
            <person name="Nuernberg P."/>
        </authorList>
    </citation>
    <scope>VARIANT GACI1 PHE-579</scope>
    <scope>VARIANT CYS-774</scope>
</reference>
<reference key="23">
    <citation type="journal article" date="2005" name="Am. J. Med. Genet. A">
        <title>Generalized arterial calcification of infancy: different clinical courses in two affected siblings.</title>
        <authorList>
            <person name="Cheng K.-S."/>
            <person name="Chen M.-R."/>
            <person name="Ruf N."/>
            <person name="Lin S.-P."/>
            <person name="Rutsch F."/>
        </authorList>
    </citation>
    <scope>VARIANTS GACI1 VAL-342 AND PHE-371</scope>
</reference>
<reference key="24">
    <citation type="journal article" date="2005" name="Diabetes">
        <title>The K121Q polymorphism of the ENPP1/PC-1 gene is associated with insulin resistance/atherogenic phenotypes, including earlier onset of type 2 diabetes and myocardial infarction.</title>
        <authorList>
            <person name="Bacci S."/>
            <person name="Ludovico O."/>
            <person name="Prudente S."/>
            <person name="Zhang Y.Y."/>
            <person name="Di Paola R."/>
            <person name="Mangiacotti D."/>
            <person name="Rauseo A."/>
            <person name="Nolan D."/>
            <person name="Duffy J."/>
            <person name="Fini G."/>
            <person name="Salvemini L."/>
            <person name="Amico C."/>
            <person name="Vigna C."/>
            <person name="Pellegrini F."/>
            <person name="Menzaghi C."/>
            <person name="Doria A."/>
            <person name="Trischitta V."/>
        </authorList>
    </citation>
    <scope>VARIANT GLN-173</scope>
    <scope>INVOLVEMENT IN T2D</scope>
</reference>
<reference key="25">
    <citation type="journal article" date="2005" name="Hum. Mutat.">
        <title>The mutational spectrum of ENPP1 as arising after the analysis of 23 unrelated patients with generalized arterial calcification of infancy (GACI).</title>
        <authorList>
            <person name="Ruf N."/>
            <person name="Uhlenberg B."/>
            <person name="Terkeltaub R."/>
            <person name="Nurnberg P."/>
            <person name="Rutsch F."/>
        </authorList>
    </citation>
    <scope>VARIANTS GACI1 LEU-250; TYR-252 DEL; THR-305; VAL-342 AND PHE-371</scope>
    <scope>VARIANT CYS-774</scope>
</reference>
<reference key="26">
    <citation type="journal article" date="2008" name="Circ. Cardiovasc. Genet.">
        <title>Hypophosphatemia, hyperphosphaturia, and bisphosphonate treatment are associated with survival beyond infancy in generalized arterial calcification of infancy.</title>
        <authorList>
            <consortium name="GACI Study Group"/>
            <person name="Rutsch F."/>
            <person name="Boeyer P."/>
            <person name="Nitschke Y."/>
            <person name="Ruf N."/>
            <person name="Lorenz-Depierieux B."/>
            <person name="Wittkampf T."/>
            <person name="Weissen-Plenz G."/>
            <person name="Fischer R.J."/>
            <person name="Mughal Z."/>
            <person name="Gregory J.W."/>
            <person name="Davies J.H."/>
            <person name="Loirat C."/>
            <person name="Strom T.M."/>
            <person name="Schnabel D."/>
            <person name="Nuernberg P."/>
            <person name="Terkeltaub R."/>
        </authorList>
    </citation>
    <scope>VARIANTS GACI1 ARG-126; TYR-216; GLU-242; LEU-250; ASN-276; THR-305; VAL-342; LYS-349; PHE-371; GLN-456; CYS-471; TRP-481; PRO-500; ARG-504; CYS-513; CYS-570; PHE-579; CYS-659; ARG-726; ARG-777; SER-792; HIS-804 AND TRP-888</scope>
    <scope>VARIANTS VAL-611; LYS-668; CYS-774 AND HIS-821</scope>
</reference>
<reference key="27">
    <citation type="journal article" date="2010" name="Am. J. Hum. Genet.">
        <title>Loss-of-function ENPP1 mutations cause both generalized arterial calcification of infancy and autosomal-recessive hypophosphatemic rickets.</title>
        <authorList>
            <person name="Lorenz-Depiereux B."/>
            <person name="Schnabel D."/>
            <person name="Tiosano D."/>
            <person name="Hausler G."/>
            <person name="Strom T.M."/>
        </authorList>
    </citation>
    <scope>VARIANT ARHR2 VAL-266</scope>
</reference>
<reference key="28">
    <citation type="journal article" date="2010" name="Am. J. Hum. Genet.">
        <title>Autosomal-recessive hypophosphatemic rickets is associated with an inactivation mutation in the ENPP1 gene.</title>
        <authorList>
            <person name="Levy-Litan V."/>
            <person name="Hershkovitz E."/>
            <person name="Avizov L."/>
            <person name="Leventhal N."/>
            <person name="Bercovich D."/>
            <person name="Chalifa-Caspi V."/>
            <person name="Manor E."/>
            <person name="Buriakovsky S."/>
            <person name="Hadad Y."/>
            <person name="Goding J."/>
            <person name="Parvari R."/>
        </authorList>
    </citation>
    <scope>VARIANT ARHR2 SER-901</scope>
    <scope>CHARACTERIZATION OF VARIANT ARHR2 SER-901</scope>
</reference>
<reference key="29">
    <citation type="journal article" date="2010" name="Am. J. Med. Genet. A">
        <title>An unusual severe vascular case of pseudoxanthoma elasticum presenting as generalized arterial calcification of infancy.</title>
        <authorList>
            <person name="Le Boulanger G."/>
            <person name="Labreze C."/>
            <person name="Croue A."/>
            <person name="Schurgers L.J."/>
            <person name="Chassaing N."/>
            <person name="Wittkampf T."/>
            <person name="Rutsch F."/>
            <person name="Martin L."/>
        </authorList>
    </citation>
    <scope>VARIANT GLN-173</scope>
</reference>
<reference key="30">
    <citation type="journal article" date="2011" name="JIMD Rep.">
        <title>Generalized arterial calcification of infancy: fatal clinical course associated with a novel mutation in ENPP1.</title>
        <authorList>
            <person name="Galletti S."/>
            <person name="Nitschke Y."/>
            <person name="Malavolti A.M."/>
            <person name="Aquilano G."/>
            <person name="Faldella G."/>
            <person name="Corvaglia L."/>
            <person name="Rutsch F."/>
        </authorList>
    </citation>
    <scope>VARIANT GACI1 VAL-218</scope>
</reference>
<reference key="31">
    <citation type="journal article" date="2012" name="Am. J. Hum. Genet.">
        <title>Generalized arterial calcification of infancy and pseudoxanthoma elasticum can be caused by mutations in either ENPP1 or ABCC6.</title>
        <authorList>
            <person name="Nitschke Y."/>
            <person name="Baujat G."/>
            <person name="Botschen U."/>
            <person name="Wittkampf T."/>
            <person name="du Moulin M."/>
            <person name="Stella J."/>
            <person name="Le Merrer M."/>
            <person name="Guest G."/>
            <person name="Lambot K."/>
            <person name="Tazarourte-Pinturier M.F."/>
            <person name="Chassaing N."/>
            <person name="Roche O."/>
            <person name="Feenstra I."/>
            <person name="Loechner K."/>
            <person name="Deshpande C."/>
            <person name="Garber S.J."/>
            <person name="Chikarmane R."/>
            <person name="Steinmann B."/>
            <person name="Shahinyan T."/>
            <person name="Martorell L."/>
            <person name="Davies J."/>
            <person name="Smith W.E."/>
            <person name="Kahler S.G."/>
            <person name="McCulloch M."/>
            <person name="Wraige E."/>
            <person name="Loidi L."/>
            <person name="Hohne W."/>
            <person name="Martin L."/>
            <person name="Hadj-Rabia S."/>
            <person name="Terkeltaub R."/>
            <person name="Rutsch F."/>
        </authorList>
    </citation>
    <scope>VARIANTS GACI1 HIS-538 AND ARG-586</scope>
</reference>
<reference key="32">
    <citation type="journal article" date="2013" name="Am. J. Hum. Genet.">
        <title>Cole disease results from mutations in ENPP1.</title>
        <authorList>
            <person name="Eytan O."/>
            <person name="Morice-Picard F."/>
            <person name="Sarig O."/>
            <person name="Ezzedine K."/>
            <person name="Isakov O."/>
            <person name="Li Q."/>
            <person name="Ishida-Yamamoto A."/>
            <person name="Shomron N."/>
            <person name="Goldsmith T."/>
            <person name="Fuchs-Telem D."/>
            <person name="Adir N."/>
            <person name="Uitto J."/>
            <person name="Orlow S.J."/>
            <person name="Taieb A."/>
            <person name="Sprecher E."/>
        </authorList>
    </citation>
    <scope>VARIANTS COLED SER-149; SER-164 AND TYR-177</scope>
</reference>
<reference key="33">
    <citation type="journal article" date="2015" name="J. Pediatr. Endocrinol. Metab.">
        <title>Early onset hearing loss in autosomal recessive hypophosphatemic rickets caused by loss of function mutation in ENPP1.</title>
        <authorList>
            <person name="Steichen-Gersdorf E."/>
            <person name="Lorenz-Depiereux B."/>
            <person name="Strom T.M."/>
            <person name="Shaw N.J."/>
        </authorList>
    </citation>
    <scope>VARIANTS ARHR2 ASP-92; ARG-219 AND SER-792</scope>
    <scope>INVOLVEMENT IN ARHR2</scope>
</reference>
<reference key="34">
    <citation type="journal article" date="2016" name="Br. J. Dermatol.">
        <title>Association of Cole disease with novel heterozygous mutations in the somatomedin-B domains of the ENPP1 gene: necessary, but not always sufficient.</title>
        <authorList>
            <person name="Schlipf N.A."/>
            <person name="Traupe H."/>
            <person name="Gilaberte Y."/>
            <person name="Peitsch W.K."/>
            <person name="Hausser I."/>
            <person name="Oji V."/>
            <person name="Schmieder A."/>
            <person name="Schneider S.W."/>
            <person name="Demmer P."/>
            <person name="Roesler B."/>
            <person name="Fischer J."/>
        </authorList>
    </citation>
    <scope>VARIANTS COLED ARG-133 AND SER-177</scope>
</reference>
<reference key="35">
    <citation type="journal article" date="2016" name="Hum. Mutat.">
        <title>Effects of Different Variants in the ENPP1 Gene on the Functional Properties of Ectonucleotide Pyrophosphatase/Phosphodiesterase Family Member 1.</title>
        <authorList>
            <person name="Stella J."/>
            <person name="Buers I."/>
            <person name="van de Wetering K."/>
            <person name="Hoehne W."/>
            <person name="Rutsch F."/>
            <person name="Nitschke Y."/>
        </authorList>
    </citation>
    <scope>VARIANTS GACI1 ARG-195; SER-195 AND CYS-301</scope>
    <scope>CHARACTERIZATION OF VARIANTS GLN-173; LYS-668; CYS-774 AND HIS-821</scope>
    <scope>CHARACTERIZATION OF VARIANTS GACI1 ARG-195; SER-195; CYS-301; THR-305; CYS-471; ARG-504; CYS-513; HIS-538; ARG-586; CYS-659; ARG-777 AND TRP-888</scope>
    <scope>FUNCTION</scope>
    <scope>SUBCELLULAR LOCATION</scope>
</reference>
<reference key="36">
    <citation type="journal article" date="2018" name="J. Invest. Dermatol.">
        <title>ENPP1 mutation causes recessive cole disease by altering melanogenesis.</title>
        <authorList>
            <person name="Chourabi M."/>
            <person name="Liew M.S."/>
            <person name="Lim S."/>
            <person name="H'mida-Ben Brahim D."/>
            <person name="Boussofara L."/>
            <person name="Dai L."/>
            <person name="Wong P.M."/>
            <person name="Foo J.N."/>
            <person name="Sriha B."/>
            <person name="Robinson K.S."/>
            <person name="Denil S."/>
            <person name="Common J.E."/>
            <person name="Mamai O."/>
            <person name="Ben Khalifa Y."/>
            <person name="Bollen M."/>
            <person name="Liu J."/>
            <person name="Denguezli M."/>
            <person name="Bonnard C."/>
            <person name="Saad A."/>
            <person name="Reversade B."/>
        </authorList>
    </citation>
    <scope>VARIANT COLED ARG-120</scope>
    <scope>CHARACTERIZATION OF VARIANTS COLED ARG-120 AND SER-164</scope>
    <scope>TISSUE SPECIFICITY</scope>
    <scope>FUNCTION</scope>
    <scope>SUBUNIT</scope>
</reference>
<reference key="37">
    <citation type="journal article" date="2018" name="Gene">
        <title>Association and in silico studies of ENPP1 gene variants with type 2 diabetes mellitus in a Northern Iranian population.</title>
        <authorList>
            <person name="Sharafshah A."/>
            <person name="Keshavarz P."/>
            <person name="Rezaei S."/>
            <person name="Farhadian N."/>
        </authorList>
    </citation>
    <scope>VARIANT GLN-173</scope>
    <scope>INVOLVEMENT IN T2D</scope>
</reference>
<accession>P22413</accession>
<accession>Q5T9R6</accession>
<accession>Q9NPZ3</accession>
<accession>Q9P1P6</accession>
<accession>Q9UP61</accession>
<accession>Q9Y6K3</accession>
<evidence type="ECO:0000250" key="1">
    <source>
        <dbReference type="UniProtKB" id="P06802"/>
    </source>
</evidence>
<evidence type="ECO:0000250" key="2">
    <source>
        <dbReference type="UniProtKB" id="Q924C3"/>
    </source>
</evidence>
<evidence type="ECO:0000250" key="3">
    <source>
        <dbReference type="UniProtKB" id="Q9R1E6"/>
    </source>
</evidence>
<evidence type="ECO:0000255" key="4"/>
<evidence type="ECO:0000255" key="5">
    <source>
        <dbReference type="PROSITE-ProRule" id="PRU00350"/>
    </source>
</evidence>
<evidence type="ECO:0000256" key="6">
    <source>
        <dbReference type="SAM" id="MobiDB-lite"/>
    </source>
</evidence>
<evidence type="ECO:0000269" key="7">
    <source>
    </source>
</evidence>
<evidence type="ECO:0000269" key="8">
    <source>
    </source>
</evidence>
<evidence type="ECO:0000269" key="9">
    <source>
    </source>
</evidence>
<evidence type="ECO:0000269" key="10">
    <source>
    </source>
</evidence>
<evidence type="ECO:0000269" key="11">
    <source>
    </source>
</evidence>
<evidence type="ECO:0000269" key="12">
    <source>
    </source>
</evidence>
<evidence type="ECO:0000269" key="13">
    <source>
    </source>
</evidence>
<evidence type="ECO:0000269" key="14">
    <source>
    </source>
</evidence>
<evidence type="ECO:0000269" key="15">
    <source>
    </source>
</evidence>
<evidence type="ECO:0000269" key="16">
    <source>
    </source>
</evidence>
<evidence type="ECO:0000269" key="17">
    <source>
    </source>
</evidence>
<evidence type="ECO:0000269" key="18">
    <source>
    </source>
</evidence>
<evidence type="ECO:0000269" key="19">
    <source>
    </source>
</evidence>
<evidence type="ECO:0000269" key="20">
    <source>
    </source>
</evidence>
<evidence type="ECO:0000269" key="21">
    <source>
    </source>
</evidence>
<evidence type="ECO:0000269" key="22">
    <source>
    </source>
</evidence>
<evidence type="ECO:0000269" key="23">
    <source>
    </source>
</evidence>
<evidence type="ECO:0000269" key="24">
    <source>
    </source>
</evidence>
<evidence type="ECO:0000269" key="25">
    <source>
    </source>
</evidence>
<evidence type="ECO:0000269" key="26">
    <source>
    </source>
</evidence>
<evidence type="ECO:0000269" key="27">
    <source>
    </source>
</evidence>
<evidence type="ECO:0000269" key="28">
    <source>
    </source>
</evidence>
<evidence type="ECO:0000269" key="29">
    <source>
    </source>
</evidence>
<evidence type="ECO:0000269" key="30">
    <source>
    </source>
</evidence>
<evidence type="ECO:0000269" key="31">
    <source>
    </source>
</evidence>
<evidence type="ECO:0000269" key="32">
    <source>
    </source>
</evidence>
<evidence type="ECO:0000269" key="33">
    <source>
    </source>
</evidence>
<evidence type="ECO:0000269" key="34">
    <source>
    </source>
</evidence>
<evidence type="ECO:0000303" key="35">
    <source>
    </source>
</evidence>
<evidence type="ECO:0000303" key="36">
    <source>
    </source>
</evidence>
<evidence type="ECO:0000303" key="37">
    <source>
    </source>
</evidence>
<evidence type="ECO:0000303" key="38">
    <source>
    </source>
</evidence>
<evidence type="ECO:0000305" key="39"/>
<evidence type="ECO:0000305" key="40">
    <source>
    </source>
</evidence>
<evidence type="ECO:0000305" key="41">
    <source>
    </source>
</evidence>
<evidence type="ECO:0000305" key="42">
    <source>
    </source>
</evidence>
<evidence type="ECO:0000305" key="43">
    <source>
    </source>
</evidence>
<evidence type="ECO:0000312" key="44">
    <source>
        <dbReference type="HGNC" id="HGNC:3356"/>
    </source>
</evidence>
<evidence type="ECO:0007829" key="45">
    <source>
        <dbReference type="PDB" id="2YS0"/>
    </source>
</evidence>
<evidence type="ECO:0007829" key="46">
    <source>
        <dbReference type="PDB" id="8GHR"/>
    </source>
</evidence>
<keyword id="KW-0002">3D-structure</keyword>
<keyword id="KW-0091">Biomineralization</keyword>
<keyword id="KW-0106">Calcium</keyword>
<keyword id="KW-1003">Cell membrane</keyword>
<keyword id="KW-0219">Diabetes mellitus</keyword>
<keyword id="KW-0903">Direct protein sequencing</keyword>
<keyword id="KW-0225">Disease variant</keyword>
<keyword id="KW-1015">Disulfide bond</keyword>
<keyword id="KW-0325">Glycoprotein</keyword>
<keyword id="KW-0378">Hydrolase</keyword>
<keyword id="KW-0472">Membrane</keyword>
<keyword id="KW-0479">Metal-binding</keyword>
<keyword id="KW-0550">Obesity</keyword>
<keyword id="KW-0597">Phosphoprotein</keyword>
<keyword id="KW-1267">Proteomics identification</keyword>
<keyword id="KW-1185">Reference proteome</keyword>
<keyword id="KW-0677">Repeat</keyword>
<keyword id="KW-0964">Secreted</keyword>
<keyword id="KW-0735">Signal-anchor</keyword>
<keyword id="KW-0812">Transmembrane</keyword>
<keyword id="KW-1133">Transmembrane helix</keyword>
<keyword id="KW-0862">Zinc</keyword>
<organism>
    <name type="scientific">Homo sapiens</name>
    <name type="common">Human</name>
    <dbReference type="NCBI Taxonomy" id="9606"/>
    <lineage>
        <taxon>Eukaryota</taxon>
        <taxon>Metazoa</taxon>
        <taxon>Chordata</taxon>
        <taxon>Craniata</taxon>
        <taxon>Vertebrata</taxon>
        <taxon>Euteleostomi</taxon>
        <taxon>Mammalia</taxon>
        <taxon>Eutheria</taxon>
        <taxon>Euarchontoglires</taxon>
        <taxon>Primates</taxon>
        <taxon>Haplorrhini</taxon>
        <taxon>Catarrhini</taxon>
        <taxon>Hominidae</taxon>
        <taxon>Homo</taxon>
    </lineage>
</organism>
<sequence>MERDGCAGGGSRGGEGGRAPREGPAGNGRDRGRSHAAEAPGDPQAAASLLAPMDVGEEPLEKAARARTAKDPNTYKVLSLVLSVCVLTTILGCIFGLKPSCAKEVKSCKGRCFERTFGNCRCDAACVELGNCCLDYQETCIEPEHIWTCNKFRCGEKRLTRSLCACSDDCKDKGDCCINYSSVCQGEKSWVEEPCESINEPQCPAGFETPPTLLFSLDGFRAEYLHTWGGLLPVISKLKKCGTYTKNMRPVYPTKTFPNHYSIVTGLYPESHGIIDNKMYDPKMNASFSLKSKEKFNPEWYKGEPIWVTAKYQGLKSGTFFWPGSDVEINGIFPDIYKMYNGSVPFEERILAVLQWLQLPKDERPHFYTLYLEEPDSSGHSYGPVSSEVIKALQRVDGMVGMLMDGLKELNLHRCLNLILISDHGMEQGSCKKYIYLNKYLGDVKNIKVIYGPAARLRPSDVPDKYYSFNYEGIARNLSCREPNQHFKPYLKHFLPKRLHFAKSDRIEPLTFYLDPQWQLALNPSERKYCGSGFHGSDNVFSNMQALFVGYGPGFKHGIEADTFENIEVYNLMCDLLNLTPAPNNGTHGSLNHLLKNPVYTPKHPKEVHPLVQCPFTRNPRDNLGCSCNPSILPIEDFQTQFNLTVAEEKIIKHETLPYGRPRVLQKENTICLLSQHQFMSGYSQDILMPLWTSYTVDRNDSFSTEDFSNCLYQDFRIPLSPVHKCSFYKNNTKVSYGFLSPPQLNKNSSGIYSEALLTTNIVPMYQSFQVIWRYFHDTLLRKYAEERNGVNVVSGPVFDFDYDGRCDSLENLRQKRRVIRNQEILIPTHFFIVLTSCKDTSQTPLHCENLDTLAFILPHRTDNSESCVHGKHDSSWVEELLMLHRARITDVEHITGLSFYQQRKEPVSDILKLKTHLPTFSQED</sequence>
<protein>
    <recommendedName>
        <fullName>Ectonucleotide pyrophosphatase/phosphodiesterase family member 1</fullName>
        <shortName evidence="36">E-NPP 1</shortName>
    </recommendedName>
    <alternativeName>
        <fullName evidence="38">Alkaline phosphodiesterase I</fullName>
        <ecNumber evidence="33">3.1.4.1</ecNumber>
    </alternativeName>
    <alternativeName>
        <fullName>Membrane component chromosome 6 surface marker 1</fullName>
    </alternativeName>
    <alternativeName>
        <fullName evidence="39">Nucleotide diphosphatase</fullName>
    </alternativeName>
    <alternativeName>
        <fullName evidence="38">Nucleotide pyrophosphatase</fullName>
        <shortName>NPPase</shortName>
        <ecNumber evidence="33">3.6.1.9</ecNumber>
    </alternativeName>
    <alternativeName>
        <fullName>Phosphodiesterase I/nucleotide pyrophosphatase 1</fullName>
    </alternativeName>
    <alternativeName>
        <fullName evidence="37">Plasma-cell membrane glycoprotein PC-1</fullName>
    </alternativeName>
    <component>
        <recommendedName>
            <fullName evidence="39">Ectonucleotide pyrophosphatase/phosphodiesterase family member 1, secreted form</fullName>
        </recommendedName>
    </component>
</protein>
<comment type="function">
    <text evidence="1 9 25 28 29 30 32 33 40">Nucleotide pyrophosphatase that generates diphosphate (PPi) and functions in bone mineralization and soft tissue calcification by regulating pyrophosphate levels (By similarity). PPi inhibits bone mineralization and soft tissue calcification by binding to nascent hydroxyapatite crystals, thereby preventing further growth of these crystals (PubMed:11004006). Preferentially hydrolyzes ATP, but can also hydrolyze other nucleoside 5' triphosphates such as GTP, CTP and UTP to their corresponding monophosphates with release of pyrophosphate, as well as diadenosine polyphosphates, and also 3',5'-cAMP to AMP (PubMed:25344812, PubMed:27467858, PubMed:28011303, PubMed:35147247, PubMed:8001561). May also be involved in the regulation of the availability of nucleotide sugars in the endoplasmic reticulum and Golgi, and the regulation of purinergic signaling (PubMed:27467858, PubMed:8001561). Inhibits ectopic joint calcification and maintains articular chondrocytes by repressing hedgehog signaling; it is however unclear whether hedgehog inhibition is direct or indirect (By similarity). Appears to modulate insulin sensitivity and function (PubMed:10615944). Also involved in melanogenesis (PubMed:28964717). Also able to hydrolyze 2',3'-cGAMP (cyclic GMP-AMP), a second messenger that activates TMEM173/STING and triggers type-I interferon production (PubMed:25344812). 2',3'-cGAMP degradation takes place in the lumen or extracellular space, and not in the cytosol where it is produced; the role of 2',3'-cGAMP hydrolysis is therefore unclear (PubMed:25344812). Not able to hydrolyze the 2',3'-cGAMP linkage isomer 3'-3'-cGAMP (PubMed:25344812).</text>
</comment>
<comment type="catalytic activity">
    <reaction evidence="33">
        <text>Hydrolytically removes 5'-nucleotides successively from the 3'-hydroxy termini of 3'-hydroxy-terminated oligonucleotides.</text>
        <dbReference type="EC" id="3.1.4.1"/>
    </reaction>
</comment>
<comment type="catalytic activity">
    <reaction evidence="25 29">
        <text>a ribonucleoside 5'-triphosphate + H2O = a ribonucleoside 5'-phosphate + diphosphate + H(+)</text>
        <dbReference type="Rhea" id="RHEA:23996"/>
        <dbReference type="ChEBI" id="CHEBI:15377"/>
        <dbReference type="ChEBI" id="CHEBI:15378"/>
        <dbReference type="ChEBI" id="CHEBI:33019"/>
        <dbReference type="ChEBI" id="CHEBI:58043"/>
        <dbReference type="ChEBI" id="CHEBI:61557"/>
        <dbReference type="EC" id="3.6.1.9"/>
    </reaction>
    <physiologicalReaction direction="left-to-right" evidence="25 32">
        <dbReference type="Rhea" id="RHEA:23997"/>
    </physiologicalReaction>
</comment>
<comment type="catalytic activity">
    <reaction evidence="25 29">
        <text>ATP + H2O = AMP + diphosphate + H(+)</text>
        <dbReference type="Rhea" id="RHEA:14245"/>
        <dbReference type="ChEBI" id="CHEBI:15377"/>
        <dbReference type="ChEBI" id="CHEBI:15378"/>
        <dbReference type="ChEBI" id="CHEBI:30616"/>
        <dbReference type="ChEBI" id="CHEBI:33019"/>
        <dbReference type="ChEBI" id="CHEBI:456215"/>
        <dbReference type="EC" id="3.6.1.9"/>
    </reaction>
    <physiologicalReaction direction="left-to-right" evidence="41">
        <dbReference type="Rhea" id="RHEA:14246"/>
    </physiologicalReaction>
</comment>
<comment type="catalytic activity">
    <reaction evidence="29">
        <text>UTP + H2O = UMP + diphosphate + H(+)</text>
        <dbReference type="Rhea" id="RHEA:29395"/>
        <dbReference type="ChEBI" id="CHEBI:15377"/>
        <dbReference type="ChEBI" id="CHEBI:15378"/>
        <dbReference type="ChEBI" id="CHEBI:33019"/>
        <dbReference type="ChEBI" id="CHEBI:46398"/>
        <dbReference type="ChEBI" id="CHEBI:57865"/>
        <dbReference type="EC" id="3.6.1.9"/>
    </reaction>
    <physiologicalReaction direction="left-to-right" evidence="42">
        <dbReference type="Rhea" id="RHEA:29396"/>
    </physiologicalReaction>
</comment>
<comment type="catalytic activity">
    <reaction evidence="1">
        <text>GTP + H2O = GMP + diphosphate + H(+)</text>
        <dbReference type="Rhea" id="RHEA:29391"/>
        <dbReference type="ChEBI" id="CHEBI:15377"/>
        <dbReference type="ChEBI" id="CHEBI:15378"/>
        <dbReference type="ChEBI" id="CHEBI:33019"/>
        <dbReference type="ChEBI" id="CHEBI:37565"/>
        <dbReference type="ChEBI" id="CHEBI:58115"/>
        <dbReference type="EC" id="3.6.1.9"/>
    </reaction>
    <physiologicalReaction direction="left-to-right" evidence="1">
        <dbReference type="Rhea" id="RHEA:29392"/>
    </physiologicalReaction>
</comment>
<comment type="catalytic activity">
    <reaction evidence="1">
        <text>CTP + H2O = CMP + diphosphate + H(+)</text>
        <dbReference type="Rhea" id="RHEA:27762"/>
        <dbReference type="ChEBI" id="CHEBI:15377"/>
        <dbReference type="ChEBI" id="CHEBI:15378"/>
        <dbReference type="ChEBI" id="CHEBI:33019"/>
        <dbReference type="ChEBI" id="CHEBI:37563"/>
        <dbReference type="ChEBI" id="CHEBI:60377"/>
        <dbReference type="EC" id="3.6.1.9"/>
    </reaction>
    <physiologicalReaction direction="left-to-right" evidence="1">
        <dbReference type="Rhea" id="RHEA:27763"/>
    </physiologicalReaction>
</comment>
<comment type="catalytic activity">
    <reaction evidence="25 29">
        <text>2',3'-cGAMP + 2 H2O = GMP + AMP + 2 H(+)</text>
        <dbReference type="Rhea" id="RHEA:58808"/>
        <dbReference type="ChEBI" id="CHEBI:15377"/>
        <dbReference type="ChEBI" id="CHEBI:15378"/>
        <dbReference type="ChEBI" id="CHEBI:58115"/>
        <dbReference type="ChEBI" id="CHEBI:143093"/>
        <dbReference type="ChEBI" id="CHEBI:456215"/>
    </reaction>
    <physiologicalReaction direction="left-to-right" evidence="25">
        <dbReference type="Rhea" id="RHEA:58809"/>
    </physiologicalReaction>
</comment>
<comment type="catalytic activity">
    <reaction evidence="29">
        <text>P(1),P(4)-bis(5'-adenosyl) tetraphosphate + H2O = AMP + ATP + 2 H(+)</text>
        <dbReference type="Rhea" id="RHEA:32039"/>
        <dbReference type="ChEBI" id="CHEBI:15377"/>
        <dbReference type="ChEBI" id="CHEBI:15378"/>
        <dbReference type="ChEBI" id="CHEBI:30616"/>
        <dbReference type="ChEBI" id="CHEBI:58141"/>
        <dbReference type="ChEBI" id="CHEBI:456215"/>
    </reaction>
    <physiologicalReaction direction="left-to-right" evidence="42">
        <dbReference type="Rhea" id="RHEA:32040"/>
    </physiologicalReaction>
</comment>
<comment type="catalytic activity">
    <reaction evidence="29">
        <text>3',5'-cyclic AMP + H2O = AMP + H(+)</text>
        <dbReference type="Rhea" id="RHEA:25277"/>
        <dbReference type="ChEBI" id="CHEBI:15377"/>
        <dbReference type="ChEBI" id="CHEBI:15378"/>
        <dbReference type="ChEBI" id="CHEBI:58165"/>
        <dbReference type="ChEBI" id="CHEBI:456215"/>
    </reaction>
    <physiologicalReaction direction="left-to-right" evidence="42">
        <dbReference type="Rhea" id="RHEA:25278"/>
    </physiologicalReaction>
</comment>
<comment type="cofactor">
    <cofactor evidence="1">
        <name>Zn(2+)</name>
        <dbReference type="ChEBI" id="CHEBI:29105"/>
    </cofactor>
    <text evidence="1">Binds 2 Zn(2+) ions per subunit.</text>
</comment>
<comment type="activity regulation">
    <text evidence="1">At low concentrations of ATP, a phosphorylated intermediate is formed which inhibits further hydrolysis.</text>
</comment>
<comment type="biophysicochemical properties">
    <kinetics>
        <KM evidence="29">8.17 uM for ATP</KM>
        <KM evidence="29">20.5 uM for AP4A (P(1),P(4)-bis(5'-adenosyl) tetraphosphate)</KM>
        <KM evidence="29">32.6 uM for 2',3'-cGAMP</KM>
        <KM evidence="29">56.6 uM for UTP</KM>
        <KM evidence="29">114 uM for 3',5'-cyclic AMP</KM>
        <KM evidence="25">15 uM for 2',3'-cGAMP</KM>
        <KM evidence="25">20 uM for ATP</KM>
        <text evidence="25 29">kcat is 5.51 sec(-1) with ATP as substrate (PubMed:28011303). kcat is 5.65 sec(-1) with AP4A as substrate (PubMed:28011303). kcat is 5.36 sec(-1) with 2',3'-cGAMP as substrate (PubMed:28011303). kcat is 1.96 sec(-1) with UTP as substrate (PubMed:28011303). kcat is 2.16 sec(-1) with 3',5'-cyclic AMP as substrate (PubMed:28011303). kcat is kcat is 4 sec(-1) with 2',3'-cGAMP as substrate (PubMed:25344812). kcat is 12 sec(-1) with ATP as substrate (PubMed:25344812).</text>
    </kinetics>
</comment>
<comment type="subunit">
    <molecule>Ectonucleotide pyrophosphatase/phosphodiesterase family member 1</molecule>
    <text evidence="9 30">Homodimer (PubMed:28964717). Interacts with INSR; leading to inhibit INSR autophosphorylation and subsequent activation of INSR kinase activity (PubMed:10615944).</text>
</comment>
<comment type="subunit">
    <molecule>Ectonucleotide pyrophosphatase/phosphodiesterase family member 1, secreted form</molecule>
    <text evidence="1">Monomeric (By similarity).</text>
</comment>
<comment type="interaction">
    <interactant intactId="EBI-3197846">
        <id>P22413</id>
    </interactant>
    <interactant intactId="EBI-1569435">
        <id>Q9UNQ0</id>
        <label>ABCG2</label>
    </interactant>
    <organismsDiffer>false</organismsDiffer>
    <experiments>4</experiments>
</comment>
<comment type="subcellular location">
    <molecule>Ectonucleotide pyrophosphatase/phosphodiesterase family member 1</molecule>
    <subcellularLocation>
        <location evidence="12 28 33">Cell membrane</location>
        <topology>Single-pass type II membrane protein</topology>
    </subcellularLocation>
    <subcellularLocation>
        <location evidence="10">Basolateral cell membrane</location>
        <topology>Single-pass type II membrane protein</topology>
    </subcellularLocation>
    <text evidence="10">Targeted to the basolateral membrane in polarized epithelial cells and in hepatocytes, and to matrix vesicles in osteoblasts (PubMed:11598187). In bile duct cells and cancer cells, located to the apical cytoplasmic side (PubMed:11598187).</text>
</comment>
<comment type="subcellular location">
    <molecule>Ectonucleotide pyrophosphatase/phosphodiesterase family member 1, secreted form</molecule>
    <subcellularLocation>
        <location evidence="1">Secreted</location>
    </subcellularLocation>
    <text evidence="1">Secreted following proteolytic cleavage.</text>
</comment>
<comment type="tissue specificity">
    <text evidence="30 34">Expressed in plasma cells and also in a number of non-lymphoid tissues, including the distal convoluted tubule of the kidney, chondrocytes and epididymis (PubMed:9344668). Expressed in melanocytes but not in keratinocytes (PubMed:28964717).</text>
</comment>
<comment type="domain">
    <text evidence="1">The di-leucine motif is required for basolateral targeting in epithelial cells, and for targeting to matrix vesicles derived from mineralizing cells.</text>
</comment>
<comment type="domain">
    <text evidence="1">The nuclease-like domain is most probably catalytically inactive as residues that are essential for catalysis in the DNA/RNA non-specific endonucleases are not conserved. However, it is required for the stability of the protein and the catalytic activity born by the phosphodiesterase domain.</text>
</comment>
<comment type="PTM">
    <text evidence="43">Autophosphorylated as part of the catalytic cycle of phosphodiesterase/pyrophosphatase activity.</text>
</comment>
<comment type="PTM">
    <text evidence="16 17 33">N-glycosylated.</text>
</comment>
<comment type="PTM">
    <text evidence="1">The secreted form is produced through cleavage at Lys-103 by intracellular processing.</text>
</comment>
<comment type="disease" evidence="7">
    <disease id="DI-02820">
        <name>Ossification of the posterior longitudinal ligament of the spine</name>
        <acronym>OPLL</acronym>
        <description>A calcification of the posterior longitudinal ligament of the spinal column, usually at the level of the cervical spine. Patients with OPLL frequently present with a severe myelopathy that can lead to tetraparesis.</description>
        <dbReference type="MIM" id="602475"/>
    </disease>
    <text>The disease is caused by variants affecting the gene represented in this entry.</text>
</comment>
<comment type="disease" evidence="11 13 14 18 22 23 28">
    <disease id="DI-01806">
        <name>Arterial calcification of infancy, generalized, 1</name>
        <acronym>GACI1</acronym>
        <description>A severe autosomal recessive disorder characterized by calcification of the internal elastic lamina of muscular arteries and stenosis due to myointimal proliferation. The disorder is often fatal within the first 6 months of life because of myocardial ischemia resulting in refractory heart failure.</description>
        <dbReference type="MIM" id="208000"/>
    </disease>
    <text>The disease is caused by variants affecting the gene represented in this entry.</text>
</comment>
<comment type="disease" evidence="15 31">
    <disease id="DI-02060">
        <name>Type 2 diabetes mellitus</name>
        <acronym>T2D</acronym>
        <description>A multifactorial disorder of glucose homeostasis caused by a lack of sensitivity to insulin. Affected individuals usually have an obese body habitus and manifestations of a metabolic syndrome characterized by diabetes, insulin resistance, hypertension and hypertriglyceridemia. The disease results in long-term complications that affect the eyes, kidneys, nerves, and blood vessels.</description>
        <dbReference type="MIM" id="125853"/>
    </disease>
    <text>Disease susceptibility is associated with variants affecting the gene represented in this entry.</text>
</comment>
<comment type="disease" evidence="20 21 26">
    <disease id="DI-02785">
        <name>Hypophosphatemic rickets, autosomal recessive, 2</name>
        <acronym>ARHR2</acronym>
        <description>A hereditary form of hypophosphatemic rickets, a disorder of proximal renal tubule function that causes phosphate loss, hypophosphatemia and skeletal deformities, including rickets and osteomalacia unresponsive to vitamin D. Symptoms are bone pain, fractures and growth abnormalities.</description>
        <dbReference type="MIM" id="613312"/>
    </disease>
    <text>The disease is caused by variants affecting the gene represented in this entry.</text>
</comment>
<comment type="disease" evidence="24 27 30">
    <disease id="DI-03946">
        <name>Cole disease</name>
        <acronym>COLED</acronym>
        <description>A rare autosomal dominant genodermatosis characterized by punctate keratoderma associated with irregularly shaped hypopigmented macules, which are typically found over the arms and legs but not the trunk or acral regions. Skin biopsies of palmoplantar lesions show hyperorthokeratosis, hypergranulosis, and acanthosis. Hypopigmented areas of skin, however, reveal a reduction in melanin content in keratinocytes but not in melanocytes, as well as hyperkeratosis and a normal number of melanocytes. Ultrastructurally, melanocytes show a disproportionately large number of melanosomes in the cytoplasm and dendrites, whereas keratinocytes show a paucity of these organelles, suggestive of impaired melanosome transfer. Some patients also exhibit calcinosis cutis or calcific tendinopathy.</description>
        <dbReference type="MIM" id="615522"/>
    </disease>
    <text>The disease is caused by variants affecting the gene represented in this entry.</text>
</comment>
<comment type="similarity">
    <text evidence="39">Belongs to the nucleotide pyrophosphatase/phosphodiesterase family.</text>
</comment>
<comment type="caution">
    <text evidence="39">It is uncertain whether Met-1 or Met-53 is the initiator.</text>
</comment>
<comment type="sequence caution" evidence="39">
    <conflict type="erroneous initiation">
        <sequence resource="EMBL-CDS" id="AAA63237"/>
    </conflict>
    <text>Truncated N-terminus.</text>
</comment>
<comment type="sequence caution" evidence="39">
    <conflict type="erroneous initiation">
        <sequence resource="EMBL-CDS" id="AAH59375"/>
    </conflict>
    <text>Truncated N-terminus.</text>
</comment>
<comment type="sequence caution" evidence="39">
    <conflict type="erroneous initiation">
        <sequence resource="EMBL-CDS" id="BAA02054"/>
    </conflict>
    <text>Truncated N-terminus.</text>
</comment>
<gene>
    <name evidence="44" type="primary">ENPP1</name>
    <name type="synonym">M6S1</name>
    <name evidence="35" type="synonym">NPPS</name>
    <name evidence="37" type="synonym">PC1</name>
    <name type="synonym">PDNP1</name>
</gene>
<name>ENPP1_HUMAN</name>